<feature type="initiator methionine" description="Removed" evidence="33">
    <location>
        <position position="1"/>
    </location>
</feature>
<feature type="chain" id="PRO_0000063754" description="Vimentin">
    <location>
        <begin position="2"/>
        <end position="466"/>
    </location>
</feature>
<feature type="domain" description="IF rod" evidence="4">
    <location>
        <begin position="103"/>
        <end position="411"/>
    </location>
</feature>
<feature type="region of interest" description="Disordered" evidence="5">
    <location>
        <begin position="1"/>
        <end position="32"/>
    </location>
</feature>
<feature type="region of interest" description="Head">
    <location>
        <begin position="2"/>
        <end position="95"/>
    </location>
</feature>
<feature type="region of interest" description="Coil 1A">
    <location>
        <begin position="96"/>
        <end position="131"/>
    </location>
</feature>
<feature type="region of interest" description="Linker 1">
    <location>
        <begin position="132"/>
        <end position="153"/>
    </location>
</feature>
<feature type="region of interest" description="Coil 1B">
    <location>
        <begin position="154"/>
        <end position="245"/>
    </location>
</feature>
<feature type="region of interest" description="Linker 12">
    <location>
        <begin position="246"/>
        <end position="268"/>
    </location>
</feature>
<feature type="region of interest" description="Coil 2">
    <location>
        <begin position="269"/>
        <end position="407"/>
    </location>
</feature>
<feature type="region of interest" description="Tail">
    <location>
        <begin position="408"/>
        <end position="466"/>
    </location>
</feature>
<feature type="coiled-coil region" evidence="20">
    <location>
        <begin position="96"/>
        <end position="131"/>
    </location>
</feature>
<feature type="coiled-coil region" evidence="20">
    <location>
        <begin position="154"/>
        <end position="245"/>
    </location>
</feature>
<feature type="coiled-coil region" evidence="20">
    <location>
        <begin position="303"/>
        <end position="407"/>
    </location>
</feature>
<feature type="short sequence motif" description="[IL]-x-C-x-x-[DE] motif" evidence="36">
    <location>
        <begin position="326"/>
        <end position="329"/>
    </location>
</feature>
<feature type="compositionally biased region" description="Low complexity" evidence="5">
    <location>
        <begin position="1"/>
        <end position="13"/>
    </location>
</feature>
<feature type="compositionally biased region" description="Low complexity" evidence="5">
    <location>
        <begin position="20"/>
        <end position="32"/>
    </location>
</feature>
<feature type="site" description="Stutter">
    <location>
        <position position="351"/>
    </location>
</feature>
<feature type="modified residue" description="N-acetylserine" evidence="33">
    <location>
        <position position="2"/>
    </location>
</feature>
<feature type="modified residue" description="Phosphoserine" evidence="8 43">
    <location>
        <position position="5"/>
    </location>
</feature>
<feature type="modified residue" description="Phosphoserine; by PKA and PKC; alternate" evidence="8">
    <location>
        <position position="7"/>
    </location>
</feature>
<feature type="modified residue" description="Phosphoserine" evidence="8">
    <location>
        <position position="8"/>
    </location>
</feature>
<feature type="modified residue" description="Phosphoserine; by PKC" evidence="8">
    <location>
        <position position="9"/>
    </location>
</feature>
<feature type="modified residue" description="Phosphoserine; by PKC" evidence="8">
    <location>
        <position position="10"/>
    </location>
</feature>
<feature type="modified residue" description="Phosphothreonine" evidence="47 50">
    <location>
        <position position="20"/>
    </location>
</feature>
<feature type="modified residue" description="Phosphoserine" evidence="43 49 50">
    <location>
        <position position="25"/>
    </location>
</feature>
<feature type="modified residue" description="Phosphoserine" evidence="49">
    <location>
        <position position="26"/>
    </location>
</feature>
<feature type="modified residue" description="Phosphoserine; by PKC; alternate" evidence="43">
    <location>
        <position position="34"/>
    </location>
</feature>
<feature type="modified residue" description="Phosphoserine; by CaMK2, PKA, PKC and ROCK2" evidence="8 43 49 50">
    <location>
        <position position="39"/>
    </location>
</feature>
<feature type="modified residue" description="Phosphoserine; by PKC" evidence="8 43 47 49">
    <location>
        <position position="42"/>
    </location>
</feature>
<feature type="modified residue" description="Phosphoserine" evidence="47 49">
    <location>
        <position position="47"/>
    </location>
</feature>
<feature type="modified residue" description="Phosphoserine" evidence="49">
    <location>
        <position position="49"/>
    </location>
</feature>
<feature type="modified residue" description="Phosphoserine" evidence="43 46 47 48 49">
    <location>
        <position position="51"/>
    </location>
</feature>
<feature type="modified residue" description="Phosphotyrosine" evidence="2">
    <location>
        <position position="53"/>
    </location>
</feature>
<feature type="modified residue" description="Phosphoserine" evidence="3">
    <location>
        <position position="55"/>
    </location>
</feature>
<feature type="modified residue" description="Phosphoserine; by CDK5 and CDK1" evidence="21 34 40 43 46 47 49">
    <location>
        <position position="56"/>
    </location>
</feature>
<feature type="modified residue" description="Phosphotyrosine" evidence="43 46 49">
    <location>
        <position position="61"/>
    </location>
</feature>
<feature type="modified residue" description="Phosphoserine" evidence="49">
    <location>
        <position position="66"/>
    </location>
</feature>
<feature type="modified residue" description="Phosphoserine; by AURKB and ROCK2" evidence="7 8 43">
    <location>
        <position position="72"/>
    </location>
</feature>
<feature type="modified residue" description="Phosphoserine" evidence="8 43 47 49">
    <location>
        <position position="73"/>
    </location>
</feature>
<feature type="modified residue" description="Phosphoserine" evidence="43 47 50">
    <location>
        <position position="83"/>
    </location>
</feature>
<feature type="modified residue" description="Phosphoserine" evidence="50">
    <location>
        <position position="87"/>
    </location>
</feature>
<feature type="modified residue" description="Phosphotyrosine" evidence="39">
    <location>
        <position position="117"/>
    </location>
</feature>
<feature type="modified residue" description="N6-acetyllysine; alternate" evidence="45">
    <location>
        <position position="120"/>
    </location>
</feature>
<feature type="modified residue" description="N6-succinyllysine; alternate" evidence="2">
    <location>
        <position position="120"/>
    </location>
</feature>
<feature type="modified residue" description="N6-acetyllysine; alternate" evidence="2">
    <location>
        <position position="129"/>
    </location>
</feature>
<feature type="modified residue" description="N6-succinyllysine; alternate" evidence="2">
    <location>
        <position position="129"/>
    </location>
</feature>
<feature type="modified residue" description="N6-acetyllysine; alternate" evidence="45">
    <location>
        <position position="139"/>
    </location>
</feature>
<feature type="modified residue" description="Phosphoserine" evidence="43 47 48">
    <location>
        <position position="144"/>
    </location>
</feature>
<feature type="modified residue" description="N6-acetyllysine" evidence="2">
    <location>
        <position position="168"/>
    </location>
</feature>
<feature type="modified residue" description="N6-acetyllysine; alternate" evidence="2">
    <location>
        <position position="188"/>
    </location>
</feature>
<feature type="modified residue" description="N6-succinyllysine; alternate" evidence="2">
    <location>
        <position position="188"/>
    </location>
</feature>
<feature type="modified residue" description="Phosphoserine" evidence="41 47 49 50">
    <location>
        <position position="214"/>
    </location>
</feature>
<feature type="modified residue" description="N6-acetyllysine; alternate" evidence="2">
    <location>
        <position position="223"/>
    </location>
</feature>
<feature type="modified residue" description="Phosphoserine" evidence="47 49">
    <location>
        <position position="226"/>
    </location>
</feature>
<feature type="modified residue" description="N6-acetyllysine" evidence="2">
    <location>
        <position position="235"/>
    </location>
</feature>
<feature type="modified residue" description="N6-acetyllysine; alternate" evidence="2">
    <location>
        <position position="294"/>
    </location>
</feature>
<feature type="modified residue" description="N6-succinyllysine; alternate" evidence="2">
    <location>
        <position position="294"/>
    </location>
</feature>
<feature type="modified residue" description="Phosphoserine" evidence="47 49">
    <location>
        <position position="299"/>
    </location>
</feature>
<feature type="modified residue" description="Phosphoserine" evidence="2">
    <location>
        <position position="325"/>
    </location>
</feature>
<feature type="modified residue" description="N6-acetyllysine; alternate" evidence="45">
    <location>
        <position position="373"/>
    </location>
</feature>
<feature type="modified residue" description="Phosphoserine" evidence="43">
    <location>
        <position position="409"/>
    </location>
</feature>
<feature type="modified residue" description="Phosphoserine" evidence="41 42 43 44 47">
    <location>
        <position position="412"/>
    </location>
</feature>
<feature type="modified residue" description="Phosphoserine" evidence="47 49 50">
    <location>
        <position position="419"/>
    </location>
</feature>
<feature type="modified residue" description="Phosphoserine" evidence="8 47 49">
    <location>
        <position position="420"/>
    </location>
</feature>
<feature type="modified residue" description="Phosphothreonine" evidence="47 50">
    <location>
        <position position="426"/>
    </location>
</feature>
<feature type="modified residue" description="Phosphoserine" evidence="8 47 49 50">
    <location>
        <position position="430"/>
    </location>
</feature>
<feature type="modified residue" description="Phosphothreonine" evidence="47 49">
    <location>
        <position position="436"/>
    </location>
</feature>
<feature type="modified residue" description="Phosphoserine" evidence="49">
    <location>
        <position position="438"/>
    </location>
</feature>
<feature type="modified residue" description="N6-acetyllysine; alternate" evidence="45">
    <location>
        <position position="445"/>
    </location>
</feature>
<feature type="modified residue" description="N6-succinyllysine; alternate" evidence="2">
    <location>
        <position position="445"/>
    </location>
</feature>
<feature type="modified residue" description="Phosphothreonine" evidence="49">
    <location>
        <position position="446"/>
    </location>
</feature>
<feature type="modified residue" description="Phosphothreonine" evidence="8">
    <location>
        <position position="458"/>
    </location>
</feature>
<feature type="modified residue" description="Phosphoserine" evidence="8 43 47 48 49">
    <location>
        <position position="459"/>
    </location>
</feature>
<feature type="glycosylation site" description="O-linked (GlcNAc) serine; alternate" evidence="19">
    <location>
        <position position="7"/>
    </location>
</feature>
<feature type="glycosylation site" description="O-linked (GlcNAc) threonine" evidence="19">
    <location>
        <position position="33"/>
    </location>
</feature>
<feature type="glycosylation site" description="O-linked (GlcNAc) serine; alternate" evidence="19">
    <location>
        <position position="34"/>
    </location>
</feature>
<feature type="cross-link" description="Glycyl lysine isopeptide (Lys-Gly) (interchain with G-Cter in SUMO2)" evidence="52">
    <location>
        <position position="104"/>
    </location>
</feature>
<feature type="cross-link" description="Glycyl lysine isopeptide (Lys-Gly) (interchain with G-Cter in SUMO2); alternate" evidence="52">
    <location>
        <position position="120"/>
    </location>
</feature>
<feature type="cross-link" description="Glycyl lysine isopeptide (Lys-Gly) (interchain with G-Cter in SUMO2); alternate" evidence="52">
    <location>
        <position position="129"/>
    </location>
</feature>
<feature type="cross-link" description="Glycyl lysine isopeptide (Lys-Gly) (interchain with G-Cter in SUMO2); alternate" evidence="52">
    <location>
        <position position="139"/>
    </location>
</feature>
<feature type="cross-link" description="Glycyl lysine isopeptide (Lys-Gly) (interchain with G-Cter in SUMO2); alternate" evidence="52">
    <location>
        <position position="223"/>
    </location>
</feature>
<feature type="cross-link" description="Glycyl lysine isopeptide (Lys-Gly) (interchain with G-Cter in SUMO2)" evidence="52">
    <location>
        <position position="262"/>
    </location>
</feature>
<feature type="cross-link" description="Glycyl lysine isopeptide (Lys-Gly) (interchain with G-Cter in SUMO2); alternate" evidence="52">
    <location>
        <position position="294"/>
    </location>
</feature>
<feature type="cross-link" description="Glycyl lysine isopeptide (Lys-Gly) (interchain with G-Cter in SUMO2)" evidence="52">
    <location>
        <position position="313"/>
    </location>
</feature>
<feature type="cross-link" description="Glycyl lysine isopeptide (Lys-Gly) (interchain with G-Cter in SUMO2); alternate" evidence="52">
    <location>
        <position position="373"/>
    </location>
</feature>
<feature type="cross-link" description="Glycyl lysine isopeptide (Lys-Gly) (interchain with G-Cter in SUMO2)" evidence="52">
    <location>
        <position position="439"/>
    </location>
</feature>
<feature type="cross-link" description="Glycyl lysine isopeptide (Lys-Gly) (interchain with G-Cter in SUMO1); alternate" evidence="51">
    <location>
        <position position="445"/>
    </location>
</feature>
<feature type="cross-link" description="Glycyl lysine isopeptide (Lys-Gly) (interchain with G-Cter in SUMO2); alternate" evidence="51 52">
    <location>
        <position position="445"/>
    </location>
</feature>
<feature type="sequence variant" id="VAR_070100" description="In CTRCT30; the mutation increases the proteasome activity in transfected cells; also causes a severe kinetic defect in vimentin assembly both in vitro and in vivo; dbSNP:rs121917775." evidence="16">
    <original>E</original>
    <variation>K</variation>
    <location>
        <position position="151"/>
    </location>
</feature>
<feature type="sequence variant" id="VAR_078860" description="In CTRCT30; uncertain significance; dbSNP:rs1085307141." evidence="29">
    <original>Q</original>
    <variation>R</variation>
    <location>
        <position position="208"/>
    </location>
</feature>
<feature type="sequence conflict" description="In Ref. 1; AAA61279." evidence="35" ref="1">
    <original>S</original>
    <variation>D</variation>
    <location>
        <position position="42"/>
    </location>
</feature>
<feature type="sequence conflict" description="In Ref. 12; CAA34499." evidence="35" ref="12">
    <original>R</original>
    <variation>P</variation>
    <location>
        <position position="113"/>
    </location>
</feature>
<feature type="sequence conflict" description="In Ref. 6; CAG28618." evidence="35" ref="6">
    <original>E</original>
    <variation>G</variation>
    <location>
        <position position="197"/>
    </location>
</feature>
<feature type="sequence conflict" description="In Ref. 17; AAA61281." evidence="35" ref="17">
    <original>N</original>
    <variation>S</variation>
    <location>
        <position position="201"/>
    </location>
</feature>
<feature type="sequence conflict" description="In Ref. 17; AAA61281." evidence="35" ref="17">
    <original>L</original>
    <variation>S</variation>
    <location>
        <position position="265"/>
    </location>
</feature>
<feature type="sequence conflict" description="In Ref. 17; AAA61281." evidence="35" ref="17">
    <original>S</original>
    <variation>I</variation>
    <location>
        <position position="278"/>
    </location>
</feature>
<feature type="sequence conflict" description="In Ref. 17; AAA61281." evidence="35" ref="17">
    <original>S</original>
    <variation>C</variation>
    <location>
        <position position="339"/>
    </location>
</feature>
<feature type="sequence conflict" description="In Ref. 17; AAA61281." evidence="35" ref="17">
    <original>N</original>
    <variation>K</variation>
    <location>
        <position position="350"/>
    </location>
</feature>
<feature type="sequence conflict" description="In Ref. 1; AAA61279." evidence="35" ref="1">
    <original>L</original>
    <variation>F</variation>
    <location>
        <position position="442"/>
    </location>
</feature>
<feature type="helix" evidence="54">
    <location>
        <begin position="101"/>
        <end position="135"/>
    </location>
</feature>
<feature type="helix" evidence="57">
    <location>
        <begin position="167"/>
        <end position="235"/>
    </location>
</feature>
<feature type="strand" evidence="57">
    <location>
        <begin position="238"/>
        <end position="241"/>
    </location>
</feature>
<feature type="turn" evidence="56">
    <location>
        <begin position="244"/>
        <end position="248"/>
    </location>
</feature>
<feature type="helix" evidence="55">
    <location>
        <begin position="266"/>
        <end position="334"/>
    </location>
</feature>
<feature type="helix" evidence="53">
    <location>
        <begin position="385"/>
        <end position="405"/>
    </location>
</feature>
<protein>
    <recommendedName>
        <fullName evidence="38">Vimentin</fullName>
    </recommendedName>
</protein>
<comment type="function">
    <text evidence="1 3">Vimentins are class-III intermediate filaments found in various non-epithelial cells, especially mesenchymal cells. Vimentin is attached to the nucleus, endoplasmic reticulum, and mitochondria, either laterally or terminally. Plays a role in cell directional movement, orientation, cell sheet organization and Golgi complex polarization at the cell migration front (By similarity). Protects SCRIB from proteasomal degradation and facilitates its localization to intermediate filaments in a cell contact-mediated manner (By similarity).</text>
</comment>
<comment type="function">
    <text evidence="22">Involved with LARP6 in the stabilization of type I collagen mRNAs for CO1A1 and CO1A2.</text>
</comment>
<comment type="subunit">
    <text evidence="2 3 6 10 11 12 13 14 15 18 20 22 23 25 27 28 30">Homomer assembled from elementary dimers (PubMed:20176112). Identified in complexes that contain VIM, EZR, AHNAK, BFSP1, BFSP2, ANK2, PLEC, PRX and spectrin (By similarity). Interacts with BCAS3 (PubMed:17505058). Interacts with LGSN (By similarity). Interacts with SYNM (By similarity). Interacts (via rod region) with PLEC (via CH 1 domain) (By similarity). Interacts with PLEC isoform 1C (PubMed:24940650). Interacts with STK33 (PubMed:18811945). Interacts with LARP6 (PubMed:21746880). Interacts with RAB8B (By similarity). Interacts with TOR1A; the interaction associates TOR1A with the cytoskeleton (PubMed:16361107, PubMed:18827015). Interacts with TOR1AIP1 (PubMed:16361107). Interacts with DIAPH1 (PubMed:23325789). Interacts with EPPK1; interaction is dependent of higher-order structure of intermediate filament (PubMed:16923132). Interacts with the non-receptor tyrosine kinase SRMS; the interaction leads to phosphorylation of VIM (PubMed:29496907). Interacts with NOD2 (PubMed:27812135). Interacts (via head region) with CORO1C (By similarity). Interacts with HDGF (isoform 2) (PubMed:26845719). Interacts with PRKCE (via phorbol-ester/DAG-type 2 domain) (PubMed:18408015). Interacts with BFSP2 (By similarity). Interacts with PPL (By similarity). Interacts (via rod domain) with PKP1 (PubMed:10852826). Interacts with PKP2 (PubMed:10852826). Interacts with SCRIB (via PDZ domains); the interaction protects SCRIB from proteasomal degradation and facilitates SCRIB localization to intermediate filaments, the interaction is reduced by cell contact inhibition (PubMed:19386766).</text>
</comment>
<comment type="subunit">
    <text evidence="9">(Microbial infection) Interacts with HCV core protein.</text>
</comment>
<comment type="subunit">
    <text evidence="31">(Microbial infection) Interacts with Chandipura virus glycoprotein; this interaction might facilitate the binding of the virus to the cells.</text>
</comment>
<comment type="interaction">
    <interactant intactId="EBI-353844">
        <id>P08670</id>
    </interactant>
    <interactant intactId="EBI-7730807">
        <id>Q9BYF1</id>
        <label>ACE2</label>
    </interactant>
    <organismsDiffer>false</organismsDiffer>
    <experiments>4</experiments>
</comment>
<comment type="interaction">
    <interactant intactId="EBI-353844">
        <id>P08670</id>
    </interactant>
    <interactant intactId="EBI-18899653">
        <id>Q6DHV7-2</id>
        <label>ADAL</label>
    </interactant>
    <organismsDiffer>false</organismsDiffer>
    <experiments>3</experiments>
</comment>
<comment type="interaction">
    <interactant intactId="EBI-353844">
        <id>P08670</id>
    </interactant>
    <interactant intactId="EBI-25838028">
        <id>Q8N302-2</id>
        <label>AGGF1</label>
    </interactant>
    <organismsDiffer>false</organismsDiffer>
    <experiments>3</experiments>
</comment>
<comment type="interaction">
    <interactant intactId="EBI-353844">
        <id>P08670</id>
    </interactant>
    <interactant intactId="EBI-1056291">
        <id>P54819</id>
        <label>AK2</label>
    </interactant>
    <organismsDiffer>false</organismsDiffer>
    <experiments>3</experiments>
</comment>
<comment type="interaction">
    <interactant intactId="EBI-353844">
        <id>P08670</id>
    </interactant>
    <interactant intactId="EBI-296087">
        <id>P31749</id>
        <label>AKT1</label>
    </interactant>
    <organismsDiffer>false</organismsDiffer>
    <experiments>29</experiments>
</comment>
<comment type="interaction">
    <interactant intactId="EBI-353844">
        <id>P08670</id>
    </interactant>
    <interactant intactId="EBI-296058">
        <id>P31751</id>
        <label>AKT2</label>
    </interactant>
    <organismsDiffer>false</organismsDiffer>
    <experiments>6</experiments>
</comment>
<comment type="interaction">
    <interactant intactId="EBI-353844">
        <id>P08670</id>
    </interactant>
    <interactant intactId="EBI-742909">
        <id>Q9H6L4</id>
        <label>ARMC7</label>
    </interactant>
    <organismsDiffer>false</organismsDiffer>
    <experiments>3</experiments>
</comment>
<comment type="interaction">
    <interactant intactId="EBI-353844">
        <id>P08670</id>
    </interactant>
    <interactant intactId="EBI-10254793">
        <id>Q6XD76</id>
        <label>ASCL4</label>
    </interactant>
    <organismsDiffer>false</organismsDiffer>
    <experiments>3</experiments>
</comment>
<comment type="interaction">
    <interactant intactId="EBI-353844">
        <id>P08670</id>
    </interactant>
    <interactant intactId="EBI-702390">
        <id>Q9UBB4</id>
        <label>ATXN10</label>
    </interactant>
    <organismsDiffer>false</organismsDiffer>
    <experiments>3</experiments>
</comment>
<comment type="interaction">
    <interactant intactId="EBI-353844">
        <id>P08670</id>
    </interactant>
    <interactant intactId="EBI-6083685">
        <id>Q9H6U6</id>
        <label>BCAS3</label>
    </interactant>
    <organismsDiffer>false</organismsDiffer>
    <experiments>3</experiments>
</comment>
<comment type="interaction">
    <interactant intactId="EBI-353844">
        <id>P08670</id>
    </interactant>
    <interactant intactId="EBI-949378">
        <id>Q14457</id>
        <label>BECN1</label>
    </interactant>
    <organismsDiffer>false</organismsDiffer>
    <experiments>3</experiments>
</comment>
<comment type="interaction">
    <interactant intactId="EBI-353844">
        <id>P08670</id>
    </interactant>
    <interactant intactId="EBI-2105445">
        <id>P51451</id>
        <label>BLK</label>
    </interactant>
    <organismsDiffer>false</organismsDiffer>
    <experiments>3</experiments>
</comment>
<comment type="interaction">
    <interactant intactId="EBI-353844">
        <id>P08670</id>
    </interactant>
    <interactant intactId="EBI-358049">
        <id>Q13895</id>
        <label>BYSL</label>
    </interactant>
    <organismsDiffer>false</organismsDiffer>
    <experiments>3</experiments>
</comment>
<comment type="interaction">
    <interactant intactId="EBI-353844">
        <id>P08670</id>
    </interactant>
    <interactant intactId="EBI-747505">
        <id>Q8TAB5</id>
        <label>C1orf216</label>
    </interactant>
    <organismsDiffer>false</organismsDiffer>
    <experiments>3</experiments>
</comment>
<comment type="interaction">
    <interactant intactId="EBI-353844">
        <id>P08670</id>
    </interactant>
    <interactant intactId="EBI-1383687">
        <id>Q9UQM7</id>
        <label>CAMK2A</label>
    </interactant>
    <organismsDiffer>false</organismsDiffer>
    <experiments>3</experiments>
</comment>
<comment type="interaction">
    <interactant intactId="EBI-353844">
        <id>P08670</id>
    </interactant>
    <interactant intactId="EBI-712912">
        <id>Q9HC52</id>
        <label>CBX8</label>
    </interactant>
    <organismsDiffer>false</organismsDiffer>
    <experiments>3</experiments>
</comment>
<comment type="interaction">
    <interactant intactId="EBI-353844">
        <id>P08670</id>
    </interactant>
    <interactant intactId="EBI-744556">
        <id>Q96HB5</id>
        <label>CCDC120</label>
    </interactant>
    <organismsDiffer>false</organismsDiffer>
    <experiments>3</experiments>
</comment>
<comment type="interaction">
    <interactant intactId="EBI-353844">
        <id>P08670</id>
    </interactant>
    <interactant intactId="EBI-744045">
        <id>Q9Y3D0</id>
        <label>CIAO2B</label>
    </interactant>
    <organismsDiffer>false</organismsDiffer>
    <experiments>3</experiments>
</comment>
<comment type="interaction">
    <interactant intactId="EBI-353844">
        <id>P08670</id>
    </interactant>
    <interactant intactId="EBI-473101">
        <id>Q14194</id>
        <label>CRMP1</label>
    </interactant>
    <organismsDiffer>false</organismsDiffer>
    <experiments>3</experiments>
</comment>
<comment type="interaction">
    <interactant intactId="EBI-353844">
        <id>P08670</id>
    </interactant>
    <interactant intactId="EBI-6873363">
        <id>Q8WUE5</id>
        <label>CT55</label>
    </interactant>
    <organismsDiffer>false</organismsDiffer>
    <experiments>3</experiments>
</comment>
<comment type="interaction">
    <interactant intactId="EBI-353844">
        <id>P08670</id>
    </interactant>
    <interactant intactId="EBI-5453285">
        <id>Q2TBE0</id>
        <label>CWF19L2</label>
    </interactant>
    <organismsDiffer>false</organismsDiffer>
    <experiments>3</experiments>
</comment>
<comment type="interaction">
    <interactant intactId="EBI-353844">
        <id>P08670</id>
    </interactant>
    <interactant intactId="EBI-1055572">
        <id>P17661</id>
        <label>DES</label>
    </interactant>
    <organismsDiffer>false</organismsDiffer>
    <experiments>8</experiments>
</comment>
<comment type="interaction">
    <interactant intactId="EBI-353844">
        <id>P08670</id>
    </interactant>
    <interactant intactId="EBI-372173">
        <id>O77932</id>
        <label>DXO</label>
    </interactant>
    <organismsDiffer>false</organismsDiffer>
    <experiments>3</experiments>
</comment>
<comment type="interaction">
    <interactant intactId="EBI-353844">
        <id>P08670</id>
    </interactant>
    <interactant intactId="EBI-10213520">
        <id>Q6NXG1</id>
        <label>ESRP1</label>
    </interactant>
    <organismsDiffer>false</organismsDiffer>
    <experiments>3</experiments>
</comment>
<comment type="interaction">
    <interactant intactId="EBI-353844">
        <id>P08670</id>
    </interactant>
    <interactant intactId="EBI-719941">
        <id>Q3B820</id>
        <label>FAM161A</label>
    </interactant>
    <organismsDiffer>false</organismsDiffer>
    <experiments>3</experiments>
</comment>
<comment type="interaction">
    <interactant intactId="EBI-353844">
        <id>P08670</id>
    </interactant>
    <interactant intactId="EBI-11793142">
        <id>Q96GL9</id>
        <label>FAM163A</label>
    </interactant>
    <organismsDiffer>false</organismsDiffer>
    <experiments>3</experiments>
</comment>
<comment type="interaction">
    <interactant intactId="EBI-353844">
        <id>P08670</id>
    </interactant>
    <interactant intactId="EBI-81610">
        <id>O15287</id>
        <label>FANCG</label>
    </interactant>
    <organismsDiffer>false</organismsDiffer>
    <experiments>3</experiments>
</comment>
<comment type="interaction">
    <interactant intactId="EBI-353844">
        <id>P08670</id>
    </interactant>
    <interactant intactId="EBI-744104">
        <id>P55040</id>
        <label>GEM</label>
    </interactant>
    <organismsDiffer>false</organismsDiffer>
    <experiments>3</experiments>
</comment>
<comment type="interaction">
    <interactant intactId="EBI-353844">
        <id>P08670</id>
    </interactant>
    <interactant intactId="EBI-744302">
        <id>P14136</id>
        <label>GFAP</label>
    </interactant>
    <organismsDiffer>false</organismsDiffer>
    <experiments>10</experiments>
</comment>
<comment type="interaction">
    <interactant intactId="EBI-353844">
        <id>P08670</id>
    </interactant>
    <interactant intactId="EBI-20835942">
        <id>Q4G1C9-2</id>
        <label>GLIPR1L2</label>
    </interactant>
    <organismsDiffer>false</organismsDiffer>
    <experiments>3</experiments>
</comment>
<comment type="interaction">
    <interactant intactId="EBI-353844">
        <id>P08670</id>
    </interactant>
    <interactant intactId="EBI-3957665">
        <id>Q96LI6</id>
        <label>HSFY2</label>
    </interactant>
    <organismsDiffer>false</organismsDiffer>
    <experiments>3</experiments>
</comment>
<comment type="interaction">
    <interactant intactId="EBI-353844">
        <id>P08670</id>
    </interactant>
    <interactant intactId="EBI-25469082">
        <id>P83110-1</id>
        <label>HTRA3</label>
    </interactant>
    <organismsDiffer>false</organismsDiffer>
    <experiments>4</experiments>
</comment>
<comment type="interaction">
    <interactant intactId="EBI-353844">
        <id>P08670</id>
    </interactant>
    <interactant intactId="EBI-22017714">
        <id>P83110-2</id>
        <label>HTRA3</label>
    </interactant>
    <organismsDiffer>false</organismsDiffer>
    <experiments>5</experiments>
</comment>
<comment type="interaction">
    <interactant intactId="EBI-353844">
        <id>P08670</id>
    </interactant>
    <interactant intactId="EBI-466029">
        <id>P42858</id>
        <label>HTT</label>
    </interactant>
    <organismsDiffer>false</organismsDiffer>
    <experiments>4</experiments>
</comment>
<comment type="interaction">
    <interactant intactId="EBI-353844">
        <id>P08670</id>
    </interactant>
    <interactant intactId="EBI-6509505">
        <id>Q0VD86</id>
        <label>INCA1</label>
    </interactant>
    <organismsDiffer>false</organismsDiffer>
    <experiments>3</experiments>
</comment>
<comment type="interaction">
    <interactant intactId="EBI-353844">
        <id>P08670</id>
    </interactant>
    <interactant intactId="EBI-751911">
        <id>Q92551</id>
        <label>IP6K1</label>
    </interactant>
    <organismsDiffer>false</organismsDiffer>
    <experiments>3</experiments>
</comment>
<comment type="interaction">
    <interactant intactId="EBI-353844">
        <id>P08670</id>
    </interactant>
    <interactant intactId="EBI-473199">
        <id>O95251</id>
        <label>KAT7</label>
    </interactant>
    <organismsDiffer>false</organismsDiffer>
    <experiments>4</experiments>
</comment>
<comment type="interaction">
    <interactant intactId="EBI-353844">
        <id>P08670</id>
    </interactant>
    <interactant intactId="EBI-739493">
        <id>Q6ZU52</id>
        <label>KIAA0408</label>
    </interactant>
    <organismsDiffer>false</organismsDiffer>
    <experiments>4</experiments>
</comment>
<comment type="interaction">
    <interactant intactId="EBI-353844">
        <id>P08670</id>
    </interactant>
    <interactant intactId="EBI-8472129">
        <id>Q9HAQ2</id>
        <label>KIF9</label>
    </interactant>
    <organismsDiffer>false</organismsDiffer>
    <experiments>3</experiments>
</comment>
<comment type="interaction">
    <interactant intactId="EBI-353844">
        <id>P08670</id>
    </interactant>
    <interactant intactId="EBI-14069005">
        <id>Q9BVG8-5</id>
        <label>KIFC3</label>
    </interactant>
    <organismsDiffer>false</organismsDiffer>
    <experiments>3</experiments>
</comment>
<comment type="interaction">
    <interactant intactId="EBI-353844">
        <id>P08670</id>
    </interactant>
    <interactant intactId="EBI-948266">
        <id>O14901</id>
        <label>KLF11</label>
    </interactant>
    <organismsDiffer>false</organismsDiffer>
    <experiments>3</experiments>
</comment>
<comment type="interaction">
    <interactant intactId="EBI-353844">
        <id>P08670</id>
    </interactant>
    <interactant intactId="EBI-742094">
        <id>P35900</id>
        <label>KRT20</label>
    </interactant>
    <organismsDiffer>false</organismsDiffer>
    <experiments>8</experiments>
</comment>
<comment type="interaction">
    <interactant intactId="EBI-353844">
        <id>P08670</id>
    </interactant>
    <interactant intactId="EBI-2949715">
        <id>O95678</id>
        <label>KRT75</label>
    </interactant>
    <organismsDiffer>false</organismsDiffer>
    <experiments>3</experiments>
</comment>
<comment type="interaction">
    <interactant intactId="EBI-353844">
        <id>P08670</id>
    </interactant>
    <interactant intactId="EBI-297852">
        <id>P05787</id>
        <label>KRT8</label>
    </interactant>
    <organismsDiffer>false</organismsDiffer>
    <experiments>2</experiments>
</comment>
<comment type="interaction">
    <interactant intactId="EBI-353844">
        <id>P08670</id>
    </interactant>
    <interactant intactId="EBI-715385">
        <id>Q6IAA8</id>
        <label>LAMTOR1</label>
    </interactant>
    <organismsDiffer>false</organismsDiffer>
    <experiments>3</experiments>
</comment>
<comment type="interaction">
    <interactant intactId="EBI-353844">
        <id>P08670</id>
    </interactant>
    <interactant intactId="EBI-9088686">
        <id>Q14847-2</id>
        <label>LASP1</label>
    </interactant>
    <organismsDiffer>false</organismsDiffer>
    <experiments>3</experiments>
</comment>
<comment type="interaction">
    <interactant intactId="EBI-353844">
        <id>P08670</id>
    </interactant>
    <interactant intactId="EBI-10274069">
        <id>Q8TCE9</id>
        <label>LGALS14</label>
    </interactant>
    <organismsDiffer>false</organismsDiffer>
    <experiments>3</experiments>
</comment>
<comment type="interaction">
    <interactant intactId="EBI-353844">
        <id>P08670</id>
    </interactant>
    <interactant intactId="EBI-25830459">
        <id>Q6ZQX7-4</id>
        <label>LIAT1</label>
    </interactant>
    <organismsDiffer>false</organismsDiffer>
    <experiments>3</experiments>
</comment>
<comment type="interaction">
    <interactant intactId="EBI-353844">
        <id>P08670</id>
    </interactant>
    <interactant intactId="EBI-7172227">
        <id>Q9Y4K0</id>
        <label>LOXL2</label>
    </interactant>
    <organismsDiffer>false</organismsDiffer>
    <experiments>6</experiments>
</comment>
<comment type="interaction">
    <interactant intactId="EBI-353844">
        <id>P08670</id>
    </interactant>
    <interactant intactId="EBI-10182361">
        <id>Q9NS73-5</id>
        <label>MBIP</label>
    </interactant>
    <organismsDiffer>false</organismsDiffer>
    <experiments>3</experiments>
</comment>
<comment type="interaction">
    <interactant intactId="EBI-353844">
        <id>P08670</id>
    </interactant>
    <interactant intactId="EBI-14086479">
        <id>Q8IVT4</id>
        <label>MGC50722</label>
    </interactant>
    <organismsDiffer>false</organismsDiffer>
    <experiments>3</experiments>
</comment>
<comment type="interaction">
    <interactant intactId="EBI-353844">
        <id>P08670</id>
    </interactant>
    <interactant intactId="EBI-13915737">
        <id>O76036</id>
        <label>NCR1</label>
    </interactant>
    <organismsDiffer>false</organismsDiffer>
    <experiments>3</experiments>
</comment>
<comment type="interaction">
    <interactant intactId="EBI-353844">
        <id>P08670</id>
    </interactant>
    <interactant intactId="EBI-10178578">
        <id>I6L9F6</id>
        <label>NEFL</label>
    </interactant>
    <organismsDiffer>false</organismsDiffer>
    <experiments>3</experiments>
</comment>
<comment type="interaction">
    <interactant intactId="EBI-353844">
        <id>P08670</id>
    </interactant>
    <interactant intactId="EBI-475646">
        <id>P07196</id>
        <label>NEFL</label>
    </interactant>
    <organismsDiffer>false</organismsDiffer>
    <experiments>5</experiments>
</comment>
<comment type="interaction">
    <interactant intactId="EBI-353844">
        <id>P08670</id>
    </interactant>
    <interactant intactId="EBI-1105035">
        <id>P07197</id>
        <label>NEFM</label>
    </interactant>
    <organismsDiffer>false</organismsDiffer>
    <experiments>8</experiments>
</comment>
<comment type="interaction">
    <interactant intactId="EBI-353844">
        <id>P08670</id>
    </interactant>
    <interactant intactId="EBI-10966836">
        <id>P48681</id>
        <label>NES</label>
    </interactant>
    <organismsDiffer>false</organismsDiffer>
    <experiments>5</experiments>
</comment>
<comment type="interaction">
    <interactant intactId="EBI-353844">
        <id>P08670</id>
    </interactant>
    <interactant intactId="EBI-10271199">
        <id>Q8NI38</id>
        <label>NFKBID</label>
    </interactant>
    <organismsDiffer>false</organismsDiffer>
    <experiments>3</experiments>
</comment>
<comment type="interaction">
    <interactant intactId="EBI-353844">
        <id>P08670</id>
    </interactant>
    <interactant intactId="EBI-7445625">
        <id>Q9HC29</id>
        <label>NOD2</label>
    </interactant>
    <organismsDiffer>false</organismsDiffer>
    <experiments>12</experiments>
</comment>
<comment type="interaction">
    <interactant intactId="EBI-353844">
        <id>P08670</id>
    </interactant>
    <interactant intactId="EBI-595869">
        <id>Q96IZ0</id>
        <label>PAWR</label>
    </interactant>
    <organismsDiffer>false</organismsDiffer>
    <experiments>2</experiments>
</comment>
<comment type="interaction">
    <interactant intactId="EBI-353844">
        <id>P08670</id>
    </interactant>
    <interactant intactId="EBI-602382">
        <id>Q16512</id>
        <label>PKN1</label>
    </interactant>
    <organismsDiffer>false</organismsDiffer>
    <experiments>3</experiments>
</comment>
<comment type="interaction">
    <interactant intactId="EBI-353844">
        <id>P08670</id>
    </interactant>
    <interactant intactId="EBI-9087684">
        <id>Q13835-2</id>
        <label>PKP1</label>
    </interactant>
    <organismsDiffer>false</organismsDiffer>
    <experiments>3</experiments>
</comment>
<comment type="interaction">
    <interactant intactId="EBI-353844">
        <id>P08670</id>
    </interactant>
    <interactant intactId="EBI-10171633">
        <id>Q96PV4</id>
        <label>PNMA5</label>
    </interactant>
    <organismsDiffer>false</organismsDiffer>
    <experiments>6</experiments>
</comment>
<comment type="interaction">
    <interactant intactId="EBI-353844">
        <id>P08670</id>
    </interactant>
    <interactant intactId="EBI-368321">
        <id>O60437</id>
        <label>PPL</label>
    </interactant>
    <organismsDiffer>false</organismsDiffer>
    <experiments>3</experiments>
</comment>
<comment type="interaction">
    <interactant intactId="EBI-353844">
        <id>P08670</id>
    </interactant>
    <interactant intactId="EBI-2557469">
        <id>Q6NYC8</id>
        <label>PPP1R18</label>
    </interactant>
    <organismsDiffer>false</organismsDiffer>
    <experiments>3</experiments>
</comment>
<comment type="interaction">
    <interactant intactId="EBI-353844">
        <id>P08670</id>
    </interactant>
    <interactant intactId="EBI-752074">
        <id>P41219</id>
        <label>PRPH</label>
    </interactant>
    <organismsDiffer>false</organismsDiffer>
    <experiments>4</experiments>
</comment>
<comment type="interaction">
    <interactant intactId="EBI-353844">
        <id>P08670</id>
    </interactant>
    <interactant intactId="EBI-743880">
        <id>Q8WUY3</id>
        <label>PRUNE2</label>
    </interactant>
    <organismsDiffer>false</organismsDiffer>
    <experiments>3</experiments>
</comment>
<comment type="interaction">
    <interactant intactId="EBI-353844">
        <id>P08670</id>
    </interactant>
    <interactant intactId="EBI-954531">
        <id>P54727</id>
        <label>RAD23B</label>
    </interactant>
    <organismsDiffer>false</organismsDiffer>
    <experiments>2</experiments>
</comment>
<comment type="interaction">
    <interactant intactId="EBI-353844">
        <id>P08670</id>
    </interactant>
    <interactant intactId="EBI-3909436">
        <id>Q9UJD0</id>
        <label>RIMS3</label>
    </interactant>
    <organismsDiffer>false</organismsDiffer>
    <experiments>3</experiments>
</comment>
<comment type="interaction">
    <interactant intactId="EBI-353844">
        <id>P08670</id>
    </interactant>
    <interactant intactId="EBI-748391">
        <id>Q9BWG6</id>
        <label>SCNM1</label>
    </interactant>
    <organismsDiffer>false</organismsDiffer>
    <experiments>3</experiments>
</comment>
<comment type="interaction">
    <interactant intactId="EBI-353844">
        <id>P08670</id>
    </interactant>
    <interactant intactId="EBI-2902468">
        <id>P12757</id>
        <label>SKIL</label>
    </interactant>
    <organismsDiffer>false</organismsDiffer>
    <experiments>3</experiments>
</comment>
<comment type="interaction">
    <interactant intactId="EBI-353844">
        <id>P08670</id>
    </interactant>
    <interactant intactId="EBI-358419">
        <id>Q12824</id>
        <label>SMARCB1</label>
    </interactant>
    <organismsDiffer>false</organismsDiffer>
    <experiments>4</experiments>
</comment>
<comment type="interaction">
    <interactant intactId="EBI-353844">
        <id>P08670</id>
    </interactant>
    <interactant intactId="EBI-12336127">
        <id>Q7Z614-3</id>
        <label>SNX20</label>
    </interactant>
    <organismsDiffer>false</organismsDiffer>
    <experiments>3</experiments>
</comment>
<comment type="interaction">
    <interactant intactId="EBI-353844">
        <id>P08670</id>
    </interactant>
    <interactant intactId="EBI-2659201">
        <id>Q96BD6</id>
        <label>SPSB1</label>
    </interactant>
    <organismsDiffer>false</organismsDiffer>
    <experiments>3</experiments>
</comment>
<comment type="interaction">
    <interactant intactId="EBI-353844">
        <id>P08670</id>
    </interactant>
    <interactant intactId="EBI-2323209">
        <id>Q99619</id>
        <label>SPSB2</label>
    </interactant>
    <organismsDiffer>false</organismsDiffer>
    <experiments>3</experiments>
</comment>
<comment type="interaction">
    <interactant intactId="EBI-353844">
        <id>P08670</id>
    </interactant>
    <interactant intactId="EBI-10176124">
        <id>B7ZLI8</id>
        <label>STK19</label>
    </interactant>
    <organismsDiffer>false</organismsDiffer>
    <experiments>3</experiments>
</comment>
<comment type="interaction">
    <interactant intactId="EBI-353844">
        <id>P08670</id>
    </interactant>
    <interactant intactId="EBI-11285923">
        <id>Q9H7C4</id>
        <label>SYNC</label>
    </interactant>
    <organismsDiffer>false</organismsDiffer>
    <experiments>7</experiments>
</comment>
<comment type="interaction">
    <interactant intactId="EBI-353844">
        <id>P08670</id>
    </interactant>
    <interactant intactId="EBI-11123832">
        <id>O60506-4</id>
        <label>SYNCRIP</label>
    </interactant>
    <organismsDiffer>false</organismsDiffer>
    <experiments>3</experiments>
</comment>
<comment type="interaction">
    <interactant intactId="EBI-353844">
        <id>P08670</id>
    </interactant>
    <interactant intactId="EBI-954089">
        <id>O15273</id>
        <label>TCAP</label>
    </interactant>
    <organismsDiffer>false</organismsDiffer>
    <experiments>3</experiments>
</comment>
<comment type="interaction">
    <interactant intactId="EBI-353844">
        <id>P08670</id>
    </interactant>
    <interactant intactId="EBI-710310">
        <id>Q15560</id>
        <label>TCEA2</label>
    </interactant>
    <organismsDiffer>false</organismsDiffer>
    <experiments>3</experiments>
</comment>
<comment type="interaction">
    <interactant intactId="EBI-353844">
        <id>P08670</id>
    </interactant>
    <interactant intactId="EBI-12000326">
        <id>P15923-3</id>
        <label>TCF3</label>
    </interactant>
    <organismsDiffer>false</organismsDiffer>
    <experiments>3</experiments>
</comment>
<comment type="interaction">
    <interactant intactId="EBI-353844">
        <id>P08670</id>
    </interactant>
    <interactant intactId="EBI-25832010">
        <id>Q13428-5</id>
        <label>TCOF1</label>
    </interactant>
    <organismsDiffer>false</organismsDiffer>
    <experiments>3</experiments>
</comment>
<comment type="interaction">
    <interactant intactId="EBI-353844">
        <id>P08670</id>
    </interactant>
    <interactant intactId="EBI-7684443">
        <id>Q5T1C6</id>
        <label>THEM4</label>
    </interactant>
    <organismsDiffer>false</organismsDiffer>
    <experiments>3</experiments>
</comment>
<comment type="interaction">
    <interactant intactId="EBI-353844">
        <id>P08670</id>
    </interactant>
    <interactant intactId="EBI-11741437">
        <id>Q08117-2</id>
        <label>TLE5</label>
    </interactant>
    <organismsDiffer>false</organismsDiffer>
    <experiments>3</experiments>
</comment>
<comment type="interaction">
    <interactant intactId="EBI-353844">
        <id>P08670</id>
    </interactant>
    <interactant intactId="EBI-9088037">
        <id>Q7Z403</id>
        <label>TMC6</label>
    </interactant>
    <organismsDiffer>false</organismsDiffer>
    <experiments>3</experiments>
</comment>
<comment type="interaction">
    <interactant intactId="EBI-353844">
        <id>P08670</id>
    </interactant>
    <interactant intactId="EBI-396540">
        <id>Q12888</id>
        <label>TP53BP1</label>
    </interactant>
    <organismsDiffer>false</organismsDiffer>
    <experiments>3</experiments>
</comment>
<comment type="interaction">
    <interactant intactId="EBI-353844">
        <id>P08670</id>
    </interactant>
    <interactant intactId="EBI-2820256">
        <id>Q14142</id>
        <label>TRIM14</label>
    </interactant>
    <organismsDiffer>false</organismsDiffer>
    <experiments>3</experiments>
</comment>
<comment type="interaction">
    <interactant intactId="EBI-353844">
        <id>P08670</id>
    </interactant>
    <interactant intactId="EBI-727384">
        <id>O95361</id>
        <label>TRIM16</label>
    </interactant>
    <organismsDiffer>false</organismsDiffer>
    <experiments>3</experiments>
</comment>
<comment type="interaction">
    <interactant intactId="EBI-353844">
        <id>P08670</id>
    </interactant>
    <interactant intactId="EBI-1103245">
        <id>Q9BQE3</id>
        <label>TUBA1C</label>
    </interactant>
    <organismsDiffer>false</organismsDiffer>
    <experiments>3</experiments>
</comment>
<comment type="interaction">
    <interactant intactId="EBI-353844">
        <id>P08670</id>
    </interactant>
    <interactant intactId="EBI-9088812">
        <id>Q5VYS8-5</id>
        <label>TUT7</label>
    </interactant>
    <organismsDiffer>false</organismsDiffer>
    <experiments>3</experiments>
</comment>
<comment type="interaction">
    <interactant intactId="EBI-353844">
        <id>P08670</id>
    </interactant>
    <interactant intactId="EBI-6116822">
        <id>Q8N3L3</id>
        <label>TXLNB</label>
    </interactant>
    <organismsDiffer>false</organismsDiffer>
    <experiments>6</experiments>
</comment>
<comment type="interaction">
    <interactant intactId="EBI-353844">
        <id>P08670</id>
    </interactant>
    <interactant intactId="EBI-2107455">
        <id>Q08AM6</id>
        <label>VAC14</label>
    </interactant>
    <organismsDiffer>false</organismsDiffer>
    <experiments>3</experiments>
</comment>
<comment type="interaction">
    <interactant intactId="EBI-353844">
        <id>P08670</id>
    </interactant>
    <interactant intactId="EBI-353844">
        <id>P08670</id>
        <label>VIM</label>
    </interactant>
    <organismsDiffer>false</organismsDiffer>
    <experiments>11</experiments>
</comment>
<comment type="interaction">
    <interactant intactId="EBI-353844">
        <id>P08670</id>
    </interactant>
    <interactant intactId="EBI-373380">
        <id>Q9H270</id>
        <label>VPS11</label>
    </interactant>
    <organismsDiffer>false</organismsDiffer>
    <experiments>3</experiments>
</comment>
<comment type="interaction">
    <interactant intactId="EBI-353844">
        <id>P08670</id>
    </interactant>
    <interactant intactId="EBI-347088">
        <id>P63104</id>
        <label>YWHAZ</label>
    </interactant>
    <organismsDiffer>false</organismsDiffer>
    <experiments>3</experiments>
</comment>
<comment type="interaction">
    <interactant intactId="EBI-353844">
        <id>P08670</id>
    </interactant>
    <interactant intactId="EBI-374248">
        <id>P26651</id>
        <label>ZFP36</label>
    </interactant>
    <organismsDiffer>false</organismsDiffer>
    <experiments>3</experiments>
</comment>
<comment type="interaction">
    <interactant intactId="EBI-353844">
        <id>P08670</id>
    </interactant>
    <interactant intactId="EBI-717634">
        <id>P17024</id>
        <label>ZNF20</label>
    </interactant>
    <organismsDiffer>false</organismsDiffer>
    <experiments>3</experiments>
</comment>
<comment type="interaction">
    <interactant intactId="EBI-353844">
        <id>P08670</id>
    </interactant>
    <interactant intactId="EBI-10172590">
        <id>Q7Z3I7</id>
        <label>ZNF572</label>
    </interactant>
    <organismsDiffer>false</organismsDiffer>
    <experiments>3</experiments>
</comment>
<comment type="interaction">
    <interactant intactId="EBI-353844">
        <id>P08670</id>
    </interactant>
    <interactant intactId="EBI-25492395">
        <id>PRO_0000449633</id>
        <label>rep</label>
        <dbReference type="UniProtKB" id="P0DTD1"/>
    </interactant>
    <organismsDiffer>true</organismsDiffer>
    <experiments>4</experiments>
</comment>
<comment type="interaction">
    <interactant intactId="EBI-353844">
        <id>P08670</id>
    </interactant>
    <interactant intactId="EBI-25474821">
        <id>P0DTC2</id>
        <label>S</label>
    </interactant>
    <organismsDiffer>true</organismsDiffer>
    <experiments>4</experiments>
</comment>
<comment type="interaction">
    <interactant intactId="EBI-353844">
        <id>P08670</id>
    </interactant>
    <interactant intactId="EBI-9844509">
        <id>PRO_0000037966</id>
        <dbReference type="UniProtKB" id="P14340"/>
    </interactant>
    <organismsDiffer>true</organismsDiffer>
    <experiments>10</experiments>
</comment>
<comment type="interaction">
    <interactant intactId="EBI-353844">
        <id>P08670</id>
    </interactant>
    <interactant intactId="EBI-6377335">
        <id>PRO_0000037566</id>
        <dbReference type="UniProtKB" id="P27958"/>
    </interactant>
    <organismsDiffer>true</organismsDiffer>
    <experiments>4</experiments>
</comment>
<comment type="subcellular location">
    <subcellularLocation>
        <location evidence="18 21 30">Cytoplasm</location>
    </subcellularLocation>
    <subcellularLocation>
        <location evidence="13 30">Cytoplasm</location>
        <location evidence="13 30">Cytoskeleton</location>
    </subcellularLocation>
    <subcellularLocation>
        <location evidence="3">Nucleus matrix</location>
    </subcellularLocation>
    <subcellularLocation>
        <location evidence="2">Cell membrane</location>
    </subcellularLocation>
</comment>
<comment type="tissue specificity">
    <text evidence="24 32">Highly expressed in fibroblasts, some expression in T- and B-lymphocytes, and little or no expression in Burkitt's lymphoma cell lines. Expressed in many hormone-independent mammary carcinoma cell lines.</text>
</comment>
<comment type="induction">
    <text evidence="28">Up-regulated by muramyl-dipeptide and lipopolysaccharide.</text>
</comment>
<comment type="domain">
    <text evidence="20">The central alpha-helical coiled-coil IF rod domain mediates elementary homodimerization.</text>
</comment>
<comment type="domain">
    <text evidence="36">The [IL]-x-C-x-x-[DE] motif is a proposed target motif for cysteine S-nitrosylation mediated by the iNOS-S100A8/A9 transnitrosylase complex.</text>
</comment>
<comment type="PTM">
    <text evidence="3 14 21 30 34">Filament disassembly during mitosis is promoted by phosphorylation at Ser-55 as well as by nestin (By similarity). One of the most prominent phosphoproteins in various cells of mesenchymal origin. Phosphorylation is enhanced during cell division, at which time vimentin filaments are significantly reorganized. Phosphorylation by PKN1 inhibits the formation of filaments. Phosphorylated at Ser-56 by CDK5 during neutrophil secretion in the cytoplasm (PubMed:21465480). Phosphorylated by STK33 (PubMed:18811945). Phosphorylated on tyrosine residues by SRMS (PubMed:29496907).</text>
</comment>
<comment type="PTM">
    <text evidence="19">O-glycosylated during cytokinesis at sites identical or close to phosphorylation sites, this interferes with the phosphorylation status.</text>
</comment>
<comment type="PTM">
    <text evidence="36">S-nitrosylation is induced by interferon-gamma and oxidatively-modified low-densitity lipoprotein (LDL(ox)) possibly implicating the iNOS-S100A8/9 transnitrosylase complex.</text>
</comment>
<comment type="disease" evidence="16 26 29">
    <disease id="DI-03825">
        <name>Cataract 30, multiple types</name>
        <acronym>CTRCT30</acronym>
        <description>An opacification of the crystalline lens of the eye that frequently results in visual impairment or blindness. Opacities vary in morphology, are often confined to a portion of the lens, and may be static or progressive. In general, the more posteriorly located and dense an opacity, the greater the impact on visual function.</description>
        <dbReference type="MIM" id="116300"/>
    </disease>
    <text>The disease is caused by variants affecting the gene represented in this entry.</text>
</comment>
<comment type="similarity">
    <text evidence="4">Belongs to the intermediate filament family.</text>
</comment>
<comment type="caution">
    <text evidence="17 37">Was reported to interact with SLC6A4, however the paper was retracted as some results and conclusions are not reliable.</text>
</comment>
<comment type="sequence caution" evidence="35">
    <conflict type="miscellaneous discrepancy">
        <sequence resource="EMBL-CDS" id="BAB71275"/>
    </conflict>
    <text>Product of a cloning artifact.</text>
</comment>
<comment type="online information" name="Wikipedia">
    <link uri="https://en.wikipedia.org/wiki/Vimentin"/>
    <text>Vimentin entry</text>
</comment>
<keyword id="KW-0002">3D-structure</keyword>
<keyword id="KW-0007">Acetylation</keyword>
<keyword id="KW-0898">Cataract</keyword>
<keyword id="KW-1003">Cell membrane</keyword>
<keyword id="KW-0175">Coiled coil</keyword>
<keyword id="KW-0963">Cytoplasm</keyword>
<keyword id="KW-0206">Cytoskeleton</keyword>
<keyword id="KW-0903">Direct protein sequencing</keyword>
<keyword id="KW-0225">Disease variant</keyword>
<keyword id="KW-0325">Glycoprotein</keyword>
<keyword id="KW-0945">Host-virus interaction</keyword>
<keyword id="KW-0403">Intermediate filament</keyword>
<keyword id="KW-1017">Isopeptide bond</keyword>
<keyword id="KW-0472">Membrane</keyword>
<keyword id="KW-0539">Nucleus</keyword>
<keyword id="KW-0597">Phosphoprotein</keyword>
<keyword id="KW-1267">Proteomics identification</keyword>
<keyword id="KW-1185">Reference proteome</keyword>
<keyword id="KW-0702">S-nitrosylation</keyword>
<keyword id="KW-0832">Ubl conjugation</keyword>
<sequence>MSTRSVSSSSYRRMFGGPGTASRPSSSRSYVTTSTRTYSLGSALRPSTSRSLYASSPGGVYATRSSAVRLRSSVPGVRLLQDSVDFSLADAINTEFKNTRTNEKVELQELNDRFANYIDKVRFLEQQNKILLAELEQLKGQGKSRLGDLYEEEMRELRRQVDQLTNDKARVEVERDNLAEDIMRLREKLQEEMLQREEAENTLQSFRQDVDNASLARLDLERKVESLQEEIAFLKKLHEEEIQELQAQIQEQHVQIDVDVSKPDLTAALRDVRQQYESVAAKNLQEAEEWYKSKFADLSEAANRNNDALRQAKQESTEYRRQVQSLTCEVDALKGTNESLERQMREMEENFAVEAANYQDTIGRLQDEIQNMKEEMARHLREYQDLLNVKMALDIEIATYRKLLEGEESRISLPLPNFSSLNLRETNLDSLPLVDTHSKRTLLIKTVETRDGQVINETSQHHDDLE</sequence>
<organism>
    <name type="scientific">Homo sapiens</name>
    <name type="common">Human</name>
    <dbReference type="NCBI Taxonomy" id="9606"/>
    <lineage>
        <taxon>Eukaryota</taxon>
        <taxon>Metazoa</taxon>
        <taxon>Chordata</taxon>
        <taxon>Craniata</taxon>
        <taxon>Vertebrata</taxon>
        <taxon>Euteleostomi</taxon>
        <taxon>Mammalia</taxon>
        <taxon>Eutheria</taxon>
        <taxon>Euarchontoglires</taxon>
        <taxon>Primates</taxon>
        <taxon>Haplorrhini</taxon>
        <taxon>Catarrhini</taxon>
        <taxon>Hominidae</taxon>
        <taxon>Homo</taxon>
    </lineage>
</organism>
<gene>
    <name evidence="38" type="primary">VIM</name>
</gene>
<proteinExistence type="evidence at protein level"/>
<accession>P08670</accession>
<accession>B0YJC2</accession>
<accession>D3DRU4</accession>
<accession>Q15867</accession>
<accession>Q15868</accession>
<accession>Q15869</accession>
<accession>Q548L2</accession>
<accession>Q6LER9</accession>
<accession>Q8N850</accession>
<accession>Q96ML2</accession>
<accession>Q9NTM3</accession>
<evidence type="ECO:0000250" key="1">
    <source>
        <dbReference type="UniProtKB" id="A0A8C0N8E3"/>
    </source>
</evidence>
<evidence type="ECO:0000250" key="2">
    <source>
        <dbReference type="UniProtKB" id="P20152"/>
    </source>
</evidence>
<evidence type="ECO:0000250" key="3">
    <source>
        <dbReference type="UniProtKB" id="P31000"/>
    </source>
</evidence>
<evidence type="ECO:0000255" key="4">
    <source>
        <dbReference type="PROSITE-ProRule" id="PRU01188"/>
    </source>
</evidence>
<evidence type="ECO:0000256" key="5">
    <source>
        <dbReference type="SAM" id="MobiDB-lite"/>
    </source>
</evidence>
<evidence type="ECO:0000269" key="6">
    <source>
    </source>
</evidence>
<evidence type="ECO:0000269" key="7">
    <source>
    </source>
</evidence>
<evidence type="ECO:0000269" key="8">
    <source>
    </source>
</evidence>
<evidence type="ECO:0000269" key="9">
    <source>
    </source>
</evidence>
<evidence type="ECO:0000269" key="10">
    <source>
    </source>
</evidence>
<evidence type="ECO:0000269" key="11">
    <source>
    </source>
</evidence>
<evidence type="ECO:0000269" key="12">
    <source>
    </source>
</evidence>
<evidence type="ECO:0000269" key="13">
    <source>
    </source>
</evidence>
<evidence type="ECO:0000269" key="14">
    <source>
    </source>
</evidence>
<evidence type="ECO:0000269" key="15">
    <source>
    </source>
</evidence>
<evidence type="ECO:0000269" key="16">
    <source>
    </source>
</evidence>
<evidence type="ECO:0000269" key="17">
    <source>
    </source>
</evidence>
<evidence type="ECO:0000269" key="18">
    <source>
    </source>
</evidence>
<evidence type="ECO:0000269" key="19">
    <source>
    </source>
</evidence>
<evidence type="ECO:0000269" key="20">
    <source>
    </source>
</evidence>
<evidence type="ECO:0000269" key="21">
    <source>
    </source>
</evidence>
<evidence type="ECO:0000269" key="22">
    <source>
    </source>
</evidence>
<evidence type="ECO:0000269" key="23">
    <source>
    </source>
</evidence>
<evidence type="ECO:0000269" key="24">
    <source>
    </source>
</evidence>
<evidence type="ECO:0000269" key="25">
    <source>
    </source>
</evidence>
<evidence type="ECO:0000269" key="26">
    <source>
    </source>
</evidence>
<evidence type="ECO:0000269" key="27">
    <source>
    </source>
</evidence>
<evidence type="ECO:0000269" key="28">
    <source>
    </source>
</evidence>
<evidence type="ECO:0000269" key="29">
    <source>
    </source>
</evidence>
<evidence type="ECO:0000269" key="30">
    <source>
    </source>
</evidence>
<evidence type="ECO:0000269" key="31">
    <source>
    </source>
</evidence>
<evidence type="ECO:0000269" key="32">
    <source>
    </source>
</evidence>
<evidence type="ECO:0000269" key="33">
    <source ref="13"/>
</evidence>
<evidence type="ECO:0000269" key="34">
    <source ref="14"/>
</evidence>
<evidence type="ECO:0000305" key="35"/>
<evidence type="ECO:0000305" key="36">
    <source>
    </source>
</evidence>
<evidence type="ECO:0000305" key="37">
    <source>
    </source>
</evidence>
<evidence type="ECO:0000312" key="38">
    <source>
        <dbReference type="HGNC" id="HGNC:12692"/>
    </source>
</evidence>
<evidence type="ECO:0007744" key="39">
    <source>
    </source>
</evidence>
<evidence type="ECO:0007744" key="40">
    <source>
    </source>
</evidence>
<evidence type="ECO:0007744" key="41">
    <source>
    </source>
</evidence>
<evidence type="ECO:0007744" key="42">
    <source>
    </source>
</evidence>
<evidence type="ECO:0007744" key="43">
    <source>
    </source>
</evidence>
<evidence type="ECO:0007744" key="44">
    <source>
    </source>
</evidence>
<evidence type="ECO:0007744" key="45">
    <source>
    </source>
</evidence>
<evidence type="ECO:0007744" key="46">
    <source>
    </source>
</evidence>
<evidence type="ECO:0007744" key="47">
    <source>
    </source>
</evidence>
<evidence type="ECO:0007744" key="48">
    <source>
    </source>
</evidence>
<evidence type="ECO:0007744" key="49">
    <source>
    </source>
</evidence>
<evidence type="ECO:0007744" key="50">
    <source>
    </source>
</evidence>
<evidence type="ECO:0007744" key="51">
    <source>
    </source>
</evidence>
<evidence type="ECO:0007744" key="52">
    <source>
    </source>
</evidence>
<evidence type="ECO:0007829" key="53">
    <source>
        <dbReference type="PDB" id="1GK6"/>
    </source>
</evidence>
<evidence type="ECO:0007829" key="54">
    <source>
        <dbReference type="PDB" id="1GK7"/>
    </source>
</evidence>
<evidence type="ECO:0007829" key="55">
    <source>
        <dbReference type="PDB" id="3TRT"/>
    </source>
</evidence>
<evidence type="ECO:0007829" key="56">
    <source>
        <dbReference type="PDB" id="3UF1"/>
    </source>
</evidence>
<evidence type="ECO:0007829" key="57">
    <source>
        <dbReference type="PDB" id="4YPC"/>
    </source>
</evidence>
<name>VIME_HUMAN</name>
<reference key="1">
    <citation type="journal article" date="1986" name="Mol. Cell. Biol.">
        <title>Coding sequence and growth regulation of the human vimentin gene.</title>
        <authorList>
            <person name="Ferrari S."/>
            <person name="Battini R."/>
            <person name="Kaczmarek L."/>
            <person name="Rittling S."/>
            <person name="Calabretta B."/>
            <person name="de Riel J.K."/>
            <person name="Philiponis V."/>
            <person name="Wei J.-F."/>
            <person name="Baserga R."/>
        </authorList>
    </citation>
    <scope>NUCLEOTIDE SEQUENCE [GENOMIC DNA]</scope>
</reference>
<reference key="2">
    <citation type="journal article" date="1990" name="Nucleic Acids Res.">
        <title>Nucleotide sequence of cDNA covering the complete coding part of the human vimentin gene.</title>
        <authorList>
            <person name="Honore B."/>
            <person name="Madsen P."/>
            <person name="Basse B."/>
            <person name="Andersen A."/>
            <person name="Walbum E."/>
            <person name="Celis J.E."/>
            <person name="Leffers H."/>
        </authorList>
    </citation>
    <scope>NUCLEOTIDE SEQUENCE [MRNA]</scope>
</reference>
<reference key="3">
    <citation type="journal article" date="2004" name="Br. J. Dermatol.">
        <title>SEREX identification of new tumour-associated antigens in cutaneous T-cell lymphoma.</title>
        <authorList>
            <person name="Hartmann T.B."/>
            <person name="Thiel D."/>
            <person name="Dummer R."/>
            <person name="Schadendorf D."/>
            <person name="Eichmueller S."/>
        </authorList>
    </citation>
    <scope>NUCLEOTIDE SEQUENCE [MRNA]</scope>
    <source>
        <tissue>Lymphoma</tissue>
    </source>
</reference>
<reference key="4">
    <citation type="submission" date="2007-06" db="EMBL/GenBank/DDBJ databases">
        <authorList>
            <person name="Zimbelmann R."/>
        </authorList>
    </citation>
    <scope>NUCLEOTIDE SEQUENCE [MRNA]</scope>
    <source>
        <tissue>Testis</tissue>
    </source>
</reference>
<reference key="5">
    <citation type="journal article" date="2004" name="Nat. Genet.">
        <title>Complete sequencing and characterization of 21,243 full-length human cDNAs.</title>
        <authorList>
            <person name="Ota T."/>
            <person name="Suzuki Y."/>
            <person name="Nishikawa T."/>
            <person name="Otsuki T."/>
            <person name="Sugiyama T."/>
            <person name="Irie R."/>
            <person name="Wakamatsu A."/>
            <person name="Hayashi K."/>
            <person name="Sato H."/>
            <person name="Nagai K."/>
            <person name="Kimura K."/>
            <person name="Makita H."/>
            <person name="Sekine M."/>
            <person name="Obayashi M."/>
            <person name="Nishi T."/>
            <person name="Shibahara T."/>
            <person name="Tanaka T."/>
            <person name="Ishii S."/>
            <person name="Yamamoto J."/>
            <person name="Saito K."/>
            <person name="Kawai Y."/>
            <person name="Isono Y."/>
            <person name="Nakamura Y."/>
            <person name="Nagahari K."/>
            <person name="Murakami K."/>
            <person name="Yasuda T."/>
            <person name="Iwayanagi T."/>
            <person name="Wagatsuma M."/>
            <person name="Shiratori A."/>
            <person name="Sudo H."/>
            <person name="Hosoiri T."/>
            <person name="Kaku Y."/>
            <person name="Kodaira H."/>
            <person name="Kondo H."/>
            <person name="Sugawara M."/>
            <person name="Takahashi M."/>
            <person name="Kanda K."/>
            <person name="Yokoi T."/>
            <person name="Furuya T."/>
            <person name="Kikkawa E."/>
            <person name="Omura Y."/>
            <person name="Abe K."/>
            <person name="Kamihara K."/>
            <person name="Katsuta N."/>
            <person name="Sato K."/>
            <person name="Tanikawa M."/>
            <person name="Yamazaki M."/>
            <person name="Ninomiya K."/>
            <person name="Ishibashi T."/>
            <person name="Yamashita H."/>
            <person name="Murakawa K."/>
            <person name="Fujimori K."/>
            <person name="Tanai H."/>
            <person name="Kimata M."/>
            <person name="Watanabe M."/>
            <person name="Hiraoka S."/>
            <person name="Chiba Y."/>
            <person name="Ishida S."/>
            <person name="Ono Y."/>
            <person name="Takiguchi S."/>
            <person name="Watanabe S."/>
            <person name="Yosida M."/>
            <person name="Hotuta T."/>
            <person name="Kusano J."/>
            <person name="Kanehori K."/>
            <person name="Takahashi-Fujii A."/>
            <person name="Hara H."/>
            <person name="Tanase T.-O."/>
            <person name="Nomura Y."/>
            <person name="Togiya S."/>
            <person name="Komai F."/>
            <person name="Hara R."/>
            <person name="Takeuchi K."/>
            <person name="Arita M."/>
            <person name="Imose N."/>
            <person name="Musashino K."/>
            <person name="Yuuki H."/>
            <person name="Oshima A."/>
            <person name="Sasaki N."/>
            <person name="Aotsuka S."/>
            <person name="Yoshikawa Y."/>
            <person name="Matsunawa H."/>
            <person name="Ichihara T."/>
            <person name="Shiohata N."/>
            <person name="Sano S."/>
            <person name="Moriya S."/>
            <person name="Momiyama H."/>
            <person name="Satoh N."/>
            <person name="Takami S."/>
            <person name="Terashima Y."/>
            <person name="Suzuki O."/>
            <person name="Nakagawa S."/>
            <person name="Senoh A."/>
            <person name="Mizoguchi H."/>
            <person name="Goto Y."/>
            <person name="Shimizu F."/>
            <person name="Wakebe H."/>
            <person name="Hishigaki H."/>
            <person name="Watanabe T."/>
            <person name="Sugiyama A."/>
            <person name="Takemoto M."/>
            <person name="Kawakami B."/>
            <person name="Yamazaki M."/>
            <person name="Watanabe K."/>
            <person name="Kumagai A."/>
            <person name="Itakura S."/>
            <person name="Fukuzumi Y."/>
            <person name="Fujimori Y."/>
            <person name="Komiyama M."/>
            <person name="Tashiro H."/>
            <person name="Tanigami A."/>
            <person name="Fujiwara T."/>
            <person name="Ono T."/>
            <person name="Yamada K."/>
            <person name="Fujii Y."/>
            <person name="Ozaki K."/>
            <person name="Hirao M."/>
            <person name="Ohmori Y."/>
            <person name="Kawabata A."/>
            <person name="Hikiji T."/>
            <person name="Kobatake N."/>
            <person name="Inagaki H."/>
            <person name="Ikema Y."/>
            <person name="Okamoto S."/>
            <person name="Okitani R."/>
            <person name="Kawakami T."/>
            <person name="Noguchi S."/>
            <person name="Itoh T."/>
            <person name="Shigeta K."/>
            <person name="Senba T."/>
            <person name="Matsumura K."/>
            <person name="Nakajima Y."/>
            <person name="Mizuno T."/>
            <person name="Morinaga M."/>
            <person name="Sasaki M."/>
            <person name="Togashi T."/>
            <person name="Oyama M."/>
            <person name="Hata H."/>
            <person name="Watanabe M."/>
            <person name="Komatsu T."/>
            <person name="Mizushima-Sugano J."/>
            <person name="Satoh T."/>
            <person name="Shirai Y."/>
            <person name="Takahashi Y."/>
            <person name="Nakagawa K."/>
            <person name="Okumura K."/>
            <person name="Nagase T."/>
            <person name="Nomura N."/>
            <person name="Kikuchi H."/>
            <person name="Masuho Y."/>
            <person name="Yamashita R."/>
            <person name="Nakai K."/>
            <person name="Yada T."/>
            <person name="Nakamura Y."/>
            <person name="Ohara O."/>
            <person name="Isogai T."/>
            <person name="Sugano S."/>
        </authorList>
    </citation>
    <scope>NUCLEOTIDE SEQUENCE [LARGE SCALE MRNA]</scope>
    <source>
        <tissue>Embryo</tissue>
        <tissue>Placenta</tissue>
        <tissue>Stomach</tissue>
    </source>
</reference>
<reference key="6">
    <citation type="submission" date="2004-05" db="EMBL/GenBank/DDBJ databases">
        <title>Cloning of human full open reading frames in Gateway(TM) system entry vector (pDONR201).</title>
        <authorList>
            <person name="Ebert L."/>
            <person name="Schick M."/>
            <person name="Neubert P."/>
            <person name="Schatten R."/>
            <person name="Henze S."/>
            <person name="Korn B."/>
        </authorList>
    </citation>
    <scope>NUCLEOTIDE SEQUENCE [LARGE SCALE MRNA]</scope>
</reference>
<reference key="7">
    <citation type="submission" date="2005-04" db="EMBL/GenBank/DDBJ databases">
        <authorList>
            <person name="Suzuki Y."/>
            <person name="Sugano S."/>
            <person name="Totoki Y."/>
            <person name="Toyoda A."/>
            <person name="Takeda T."/>
            <person name="Sakaki Y."/>
            <person name="Tanaka A."/>
            <person name="Yokoyama S."/>
        </authorList>
    </citation>
    <scope>NUCLEOTIDE SEQUENCE [LARGE SCALE MRNA]</scope>
    <source>
        <tissue>Adipose tissue</tissue>
        <tissue>Coronary artery</tissue>
    </source>
</reference>
<reference key="8">
    <citation type="submission" date="2007-02" db="EMBL/GenBank/DDBJ databases">
        <authorList>
            <consortium name="NHLBI resequencing and genotyping service (RS&amp;G)"/>
        </authorList>
    </citation>
    <scope>NUCLEOTIDE SEQUENCE [GENOMIC DNA]</scope>
</reference>
<reference key="9">
    <citation type="journal article" date="2004" name="Nature">
        <title>The DNA sequence and comparative analysis of human chromosome 10.</title>
        <authorList>
            <person name="Deloukas P."/>
            <person name="Earthrowl M.E."/>
            <person name="Grafham D.V."/>
            <person name="Rubenfield M."/>
            <person name="French L."/>
            <person name="Steward C.A."/>
            <person name="Sims S.K."/>
            <person name="Jones M.C."/>
            <person name="Searle S."/>
            <person name="Scott C."/>
            <person name="Howe K."/>
            <person name="Hunt S.E."/>
            <person name="Andrews T.D."/>
            <person name="Gilbert J.G.R."/>
            <person name="Swarbreck D."/>
            <person name="Ashurst J.L."/>
            <person name="Taylor A."/>
            <person name="Battles J."/>
            <person name="Bird C.P."/>
            <person name="Ainscough R."/>
            <person name="Almeida J.P."/>
            <person name="Ashwell R.I.S."/>
            <person name="Ambrose K.D."/>
            <person name="Babbage A.K."/>
            <person name="Bagguley C.L."/>
            <person name="Bailey J."/>
            <person name="Banerjee R."/>
            <person name="Bates K."/>
            <person name="Beasley H."/>
            <person name="Bray-Allen S."/>
            <person name="Brown A.J."/>
            <person name="Brown J.Y."/>
            <person name="Burford D.C."/>
            <person name="Burrill W."/>
            <person name="Burton J."/>
            <person name="Cahill P."/>
            <person name="Camire D."/>
            <person name="Carter N.P."/>
            <person name="Chapman J.C."/>
            <person name="Clark S.Y."/>
            <person name="Clarke G."/>
            <person name="Clee C.M."/>
            <person name="Clegg S."/>
            <person name="Corby N."/>
            <person name="Coulson A."/>
            <person name="Dhami P."/>
            <person name="Dutta I."/>
            <person name="Dunn M."/>
            <person name="Faulkner L."/>
            <person name="Frankish A."/>
            <person name="Frankland J.A."/>
            <person name="Garner P."/>
            <person name="Garnett J."/>
            <person name="Gribble S."/>
            <person name="Griffiths C."/>
            <person name="Grocock R."/>
            <person name="Gustafson E."/>
            <person name="Hammond S."/>
            <person name="Harley J.L."/>
            <person name="Hart E."/>
            <person name="Heath P.D."/>
            <person name="Ho T.P."/>
            <person name="Hopkins B."/>
            <person name="Horne J."/>
            <person name="Howden P.J."/>
            <person name="Huckle E."/>
            <person name="Hynds C."/>
            <person name="Johnson C."/>
            <person name="Johnson D."/>
            <person name="Kana A."/>
            <person name="Kay M."/>
            <person name="Kimberley A.M."/>
            <person name="Kershaw J.K."/>
            <person name="Kokkinaki M."/>
            <person name="Laird G.K."/>
            <person name="Lawlor S."/>
            <person name="Lee H.M."/>
            <person name="Leongamornlert D.A."/>
            <person name="Laird G."/>
            <person name="Lloyd C."/>
            <person name="Lloyd D.M."/>
            <person name="Loveland J."/>
            <person name="Lovell J."/>
            <person name="McLaren S."/>
            <person name="McLay K.E."/>
            <person name="McMurray A."/>
            <person name="Mashreghi-Mohammadi M."/>
            <person name="Matthews L."/>
            <person name="Milne S."/>
            <person name="Nickerson T."/>
            <person name="Nguyen M."/>
            <person name="Overton-Larty E."/>
            <person name="Palmer S.A."/>
            <person name="Pearce A.V."/>
            <person name="Peck A.I."/>
            <person name="Pelan S."/>
            <person name="Phillimore B."/>
            <person name="Porter K."/>
            <person name="Rice C.M."/>
            <person name="Rogosin A."/>
            <person name="Ross M.T."/>
            <person name="Sarafidou T."/>
            <person name="Sehra H.K."/>
            <person name="Shownkeen R."/>
            <person name="Skuce C.D."/>
            <person name="Smith M."/>
            <person name="Standring L."/>
            <person name="Sycamore N."/>
            <person name="Tester J."/>
            <person name="Thorpe A."/>
            <person name="Torcasso W."/>
            <person name="Tracey A."/>
            <person name="Tromans A."/>
            <person name="Tsolas J."/>
            <person name="Wall M."/>
            <person name="Walsh J."/>
            <person name="Wang H."/>
            <person name="Weinstock K."/>
            <person name="West A.P."/>
            <person name="Willey D.L."/>
            <person name="Whitehead S.L."/>
            <person name="Wilming L."/>
            <person name="Wray P.W."/>
            <person name="Young L."/>
            <person name="Chen Y."/>
            <person name="Lovering R.C."/>
            <person name="Moschonas N.K."/>
            <person name="Siebert R."/>
            <person name="Fechtel K."/>
            <person name="Bentley D."/>
            <person name="Durbin R.M."/>
            <person name="Hubbard T."/>
            <person name="Doucette-Stamm L."/>
            <person name="Beck S."/>
            <person name="Smith D.R."/>
            <person name="Rogers J."/>
        </authorList>
    </citation>
    <scope>NUCLEOTIDE SEQUENCE [LARGE SCALE GENOMIC DNA]</scope>
</reference>
<reference key="10">
    <citation type="submission" date="2005-09" db="EMBL/GenBank/DDBJ databases">
        <authorList>
            <person name="Mural R.J."/>
            <person name="Istrail S."/>
            <person name="Sutton G.G."/>
            <person name="Florea L."/>
            <person name="Halpern A.L."/>
            <person name="Mobarry C.M."/>
            <person name="Lippert R."/>
            <person name="Walenz B."/>
            <person name="Shatkay H."/>
            <person name="Dew I."/>
            <person name="Miller J.R."/>
            <person name="Flanigan M.J."/>
            <person name="Edwards N.J."/>
            <person name="Bolanos R."/>
            <person name="Fasulo D."/>
            <person name="Halldorsson B.V."/>
            <person name="Hannenhalli S."/>
            <person name="Turner R."/>
            <person name="Yooseph S."/>
            <person name="Lu F."/>
            <person name="Nusskern D.R."/>
            <person name="Shue B.C."/>
            <person name="Zheng X.H."/>
            <person name="Zhong F."/>
            <person name="Delcher A.L."/>
            <person name="Huson D.H."/>
            <person name="Kravitz S.A."/>
            <person name="Mouchard L."/>
            <person name="Reinert K."/>
            <person name="Remington K.A."/>
            <person name="Clark A.G."/>
            <person name="Waterman M.S."/>
            <person name="Eichler E.E."/>
            <person name="Adams M.D."/>
            <person name="Hunkapiller M.W."/>
            <person name="Myers E.W."/>
            <person name="Venter J.C."/>
        </authorList>
    </citation>
    <scope>NUCLEOTIDE SEQUENCE [LARGE SCALE GENOMIC DNA]</scope>
</reference>
<reference key="11">
    <citation type="journal article" date="2004" name="Genome Res.">
        <title>The status, quality, and expansion of the NIH full-length cDNA project: the Mammalian Gene Collection (MGC).</title>
        <authorList>
            <consortium name="The MGC Project Team"/>
        </authorList>
    </citation>
    <scope>NUCLEOTIDE SEQUENCE [LARGE SCALE MRNA]</scope>
    <source>
        <tissue>Cervix</tissue>
        <tissue>Placenta</tissue>
        <tissue>Testis</tissue>
    </source>
</reference>
<reference key="12">
    <citation type="journal article" date="1989" name="Cancer Res.">
        <title>Vimentin rather than keratin expression in some hormone-independent breast cancer cell lines and in oncogene-transformed mammary epithelial cells.</title>
        <authorList>
            <person name="Sommers C.L."/>
            <person name="Walker-Jones D."/>
            <person name="Heckford S.E."/>
            <person name="Worland P."/>
            <person name="Valverius E."/>
            <person name="Clark R."/>
            <person name="McCormick F."/>
            <person name="Stampfer M."/>
            <person name="Abularach S."/>
            <person name="Gelmann E.P."/>
        </authorList>
    </citation>
    <scope>NUCLEOTIDE SEQUENCE [MRNA] OF 1-135</scope>
    <scope>TISSUE SPECIFICITY</scope>
    <source>
        <tissue>Mammary carcinoma</tissue>
    </source>
</reference>
<reference key="13">
    <citation type="submission" date="2006-05" db="UniProtKB">
        <authorList>
            <person name="Bienvenut W.V."/>
            <person name="Kanor S."/>
            <person name="Tissot J.-D."/>
            <person name="Quadroni M."/>
        </authorList>
    </citation>
    <scope>PROTEIN SEQUENCE OF 2-11; 87-96; 129-138; 188-195; 223-234; 282-291; 322-333 AND 381-389</scope>
    <scope>CLEAVAGE OF INITIATOR METHIONINE</scope>
    <scope>ACETYLATION AT SER-2</scope>
    <scope>IDENTIFICATION BY MASS SPECTROMETRY</scope>
    <source>
        <tissue>T-cell</tissue>
    </source>
</reference>
<reference key="14">
    <citation type="submission" date="2010-01" db="UniProtKB">
        <authorList>
            <person name="Bienvenut W.V."/>
            <person name="Fleming J."/>
            <person name="Leug H.Y."/>
        </authorList>
    </citation>
    <scope>PROTEIN SEQUENCE OF 5-12; 14-45; 51-64; 72-78; 105-113; 123-143; 159-184; 187-217; 223-236; 271-292; 295-313; 322-390 AND 403-466</scope>
    <scope>PHOSPHORYLATION AT SER-56</scope>
    <scope>IDENTIFICATION BY MASS SPECTROMETRY</scope>
    <source>
        <tissue>Hepatoma</tissue>
    </source>
</reference>
<reference key="15">
    <citation type="journal article" date="1997" name="Electrophoresis">
        <title>Two-dimensional electrophoretic analysis of human breast carcinoma proteins: mapping of proteins that bind to the SH3 domain of mixed lineage kinase MLK2.</title>
        <authorList>
            <person name="Rasmussen R.K."/>
            <person name="Ji H."/>
            <person name="Eddes J.S."/>
            <person name="Moritz R.L."/>
            <person name="Reid G.E."/>
            <person name="Simpson R.J."/>
            <person name="Dorow D.S."/>
        </authorList>
    </citation>
    <scope>PROTEIN SEQUENCE OF 17-25 AND 55-70</scope>
    <source>
        <tissue>Mammary carcinoma</tissue>
    </source>
</reference>
<reference key="16">
    <citation type="submission" date="2008-12" db="UniProtKB">
        <authorList>
            <person name="Lubec G."/>
            <person name="Vishwanath V."/>
            <person name="Chen W.-Q."/>
            <person name="Sun Y."/>
        </authorList>
    </citation>
    <scope>PROTEIN SEQUENCE OF 51-64; 79-97; 105-113; 130-139; 146-155; 176-184; 189-207; 223-235; 283-292; 295-304; 322-334; 346-373; 382-401 AND 411-439</scope>
    <scope>IDENTIFICATION BY MASS SPECTROMETRY</scope>
    <source>
        <tissue>Brain</tissue>
        <tissue>Cajal-Retzius cell</tissue>
        <tissue>Fetal brain cortex</tissue>
    </source>
</reference>
<reference key="17">
    <citation type="journal article" date="1988" name="Gene">
        <title>Nucleotide sequence of the human vimentin gene and regulation of its transcription in tissues and cultured cells.</title>
        <authorList>
            <person name="Perreau J."/>
            <person name="Lilienbaum A."/>
            <person name="Vasseur M."/>
            <person name="Paulin D."/>
        </authorList>
    </citation>
    <scope>NUCLEOTIDE SEQUENCE [GENOMIC DNA] OF 113-466</scope>
    <scope>TISSUE SPECIFICITY</scope>
    <source>
        <tissue>Fibroblast</tissue>
    </source>
</reference>
<reference key="18">
    <citation type="journal article" date="1990" name="Gene">
        <title>Isolation of a human vimentin cDNA with a long 3'-noncoding region from a human osteosarcoma cell line (MG-63).</title>
        <authorList>
            <person name="Gupta A.K."/>
            <person name="Aubin J.E."/>
            <person name="Waye M.M.Y."/>
        </authorList>
    </citation>
    <scope>NUCLEOTIDE SEQUENCE [MRNA] OF 167-466</scope>
    <source>
        <tissue>Osteosarcoma</tissue>
    </source>
</reference>
<reference key="19">
    <citation type="journal article" date="1997" name="Biochem. Biophys. Res. Commun.">
        <title>Domain-specific phosphorylation of vimentin and glial fibrillary acidic protein by PKN.</title>
        <authorList>
            <person name="Matsuzawa K."/>
            <person name="Kosako H."/>
            <person name="Inagaki N."/>
            <person name="Shibata H."/>
            <person name="Mukai H."/>
            <person name="Ono Y."/>
            <person name="Amano M."/>
            <person name="Kaibuchi K."/>
            <person name="Matsuura Y."/>
            <person name="Azuma I."/>
            <person name="Inagaki M."/>
        </authorList>
    </citation>
    <scope>PHOSPHORYLATION</scope>
</reference>
<reference key="20">
    <citation type="journal article" date="2000" name="J. Cell Sci.">
        <title>Interaction of plakophilins with desmoplakin and intermediate filament proteins: an in vitro analysis.</title>
        <authorList>
            <person name="Hofmann I."/>
            <person name="Mertens C."/>
            <person name="Brettel M."/>
            <person name="Nimmrich V."/>
            <person name="Schnoelzer M."/>
            <person name="Herrmann H."/>
        </authorList>
    </citation>
    <scope>INTERACTION WITH PKP1 AND PKP2</scope>
</reference>
<reference key="21">
    <citation type="journal article" date="2003" name="J. Biol. Chem.">
        <title>Aurora-B regulates the cleavage furrow-specific vimentin phosphorylation in the cytokinetic process.</title>
        <authorList>
            <person name="Goto H."/>
            <person name="Yasui Y."/>
            <person name="Kawajiri A."/>
            <person name="Nigg E.A."/>
            <person name="Terada Y."/>
            <person name="Tatsuka M."/>
            <person name="Nagata K."/>
            <person name="Inagaki M."/>
        </authorList>
    </citation>
    <scope>PHOSPHORYLATION AT SER-72</scope>
</reference>
<reference key="22">
    <citation type="journal article" date="2003" name="Nature">
        <title>Proteomic characterization of the human centrosome by protein correlation profiling.</title>
        <authorList>
            <person name="Andersen J.S."/>
            <person name="Wilkinson C.J."/>
            <person name="Mayor T."/>
            <person name="Mortensen P."/>
            <person name="Nigg E.A."/>
            <person name="Mann M."/>
        </authorList>
    </citation>
    <scope>IDENTIFICATION BY MASS SPECTROMETRY</scope>
    <source>
        <tissue>Lymphoblast</tissue>
    </source>
</reference>
<reference key="23">
    <citation type="journal article" date="2004" name="J. Cell Sci.">
        <title>Specific in vivo phosphorylation sites determine the assembly dynamics of vimentin intermediate filaments.</title>
        <authorList>
            <person name="Eriksson J.E."/>
            <person name="He T."/>
            <person name="Trejo-Skalli A.V."/>
            <person name="Harmala-Brasken A.-S."/>
            <person name="Hellman J."/>
            <person name="Chou Y.-H."/>
            <person name="Goldman R.D."/>
        </authorList>
    </citation>
    <scope>PHOSPHORYLATION AT SER-5; SER-7; SER-8; SER-9; SER-10; SER-39; SER-42; SER-72; SER-73; SER-420; SER-430; THR-458 AND SER-459</scope>
    <scope>IDENTIFICATION BY MASS SPECTROMETRY</scope>
</reference>
<reference key="24">
    <citation type="journal article" date="2005" name="Nat. Biotechnol.">
        <title>Immunoaffinity profiling of tyrosine phosphorylation in cancer cells.</title>
        <authorList>
            <person name="Rush J."/>
            <person name="Moritz A."/>
            <person name="Lee K.A."/>
            <person name="Guo A."/>
            <person name="Goss V.L."/>
            <person name="Spek E.J."/>
            <person name="Zhang H."/>
            <person name="Zha X.-M."/>
            <person name="Polakiewicz R.D."/>
            <person name="Comb M.J."/>
        </authorList>
    </citation>
    <scope>PHOSPHORYLATION [LARGE SCALE ANALYSIS] AT TYR-117</scope>
    <scope>IDENTIFICATION BY MASS SPECTROMETRY [LARGE SCALE ANALYSIS]</scope>
</reference>
<reference key="25">
    <citation type="journal article" date="2005" name="Proteomics">
        <title>Proteomic profiling of cellular proteins interacting with the hepatitis C virus core protein.</title>
        <authorList>
            <person name="Kang S.-M."/>
            <person name="Shin M.-J."/>
            <person name="Kim J.-H."/>
            <person name="Oh J.-W."/>
        </authorList>
    </citation>
    <scope>INTERACTION WITH HCV CORE PROTEIN (MICROBIAL INFECTION)</scope>
</reference>
<reference key="26">
    <citation type="journal article" date="2006" name="Cell">
        <title>Global, in vivo, and site-specific phosphorylation dynamics in signaling networks.</title>
        <authorList>
            <person name="Olsen J.V."/>
            <person name="Blagoev B."/>
            <person name="Gnad F."/>
            <person name="Macek B."/>
            <person name="Kumar C."/>
            <person name="Mortensen P."/>
            <person name="Mann M."/>
        </authorList>
    </citation>
    <scope>PHOSPHORYLATION [LARGE SCALE ANALYSIS] AT SER-214 AND SER-412</scope>
    <scope>IDENTIFICATION BY MASS SPECTROMETRY [LARGE SCALE ANALYSIS]</scope>
    <source>
        <tissue>Cervix carcinoma</tissue>
    </source>
</reference>
<reference key="27">
    <citation type="journal article" date="2006" name="J. Dermatol.">
        <title>Interactions between epiplakin and intermediate filaments.</title>
        <authorList>
            <person name="Wang W."/>
            <person name="Sumiyoshi H."/>
            <person name="Yoshioka H."/>
            <person name="Fujiwara S."/>
        </authorList>
    </citation>
    <scope>INTERACTION WITH EPPK1</scope>
</reference>
<reference key="28">
    <citation type="journal article" date="2006" name="Nat. Biotechnol.">
        <title>A probability-based approach for high-throughput protein phosphorylation analysis and site localization.</title>
        <authorList>
            <person name="Beausoleil S.A."/>
            <person name="Villen J."/>
            <person name="Gerber S.A."/>
            <person name="Rush J."/>
            <person name="Gygi S.P."/>
        </authorList>
    </citation>
    <scope>PHOSPHORYLATION [LARGE SCALE ANALYSIS] AT SER-56</scope>
    <scope>IDENTIFICATION BY MASS SPECTROMETRY [LARGE SCALE ANALYSIS]</scope>
    <source>
        <tissue>Cervix carcinoma</tissue>
    </source>
</reference>
<reference key="29">
    <citation type="journal article" date="2006" name="Neurobiol. Dis.">
        <title>Dystonia-causing mutant torsinA inhibits cell adhesion and neurite extension through interference with cytoskeletal dynamics.</title>
        <authorList>
            <person name="Hewett J.W."/>
            <person name="Zeng J."/>
            <person name="Niland B.P."/>
            <person name="Bragg D.C."/>
            <person name="Breakefield X.O."/>
        </authorList>
    </citation>
    <scope>INTERACTION WITH TOR1A AND TOR1AIP1</scope>
</reference>
<reference key="30">
    <citation type="journal article" date="2007" name="J. Proteome Res.">
        <title>Improved titanium dioxide enrichment of phosphopeptides from HeLa cells and high confident phosphopeptide identification by cross-validation of MS/MS and MS/MS/MS spectra.</title>
        <authorList>
            <person name="Yu L.R."/>
            <person name="Zhu Z."/>
            <person name="Chan K.C."/>
            <person name="Issaq H.J."/>
            <person name="Dimitrov D.S."/>
            <person name="Veenstra T.D."/>
        </authorList>
    </citation>
    <scope>PHOSPHORYLATION [LARGE SCALE ANALYSIS] AT SER-412</scope>
    <scope>IDENTIFICATION BY MASS SPECTROMETRY [LARGE SCALE ANALYSIS]</scope>
    <source>
        <tissue>Cervix carcinoma</tissue>
    </source>
</reference>
<reference key="31">
    <citation type="journal article" date="2007" name="Mol. Endocrinol.">
        <title>Estrogen induces expression of BCAS3, a novel estrogen receptor-alpha coactivator, through proline-, glutamic acid-, and leucine-rich protein-1 (PELP1).</title>
        <authorList>
            <person name="Gururaj A.E."/>
            <person name="Peng S."/>
            <person name="Vadlamudi R.K."/>
            <person name="Kumar R."/>
        </authorList>
    </citation>
    <scope>INTERACTION WITH BCAS3</scope>
</reference>
<reference key="32">
    <citation type="journal article" date="2008" name="BMC Biochem.">
        <title>The serine/threonine kinase Stk33 exhibits autophosphorylation and phosphorylates the intermediate filament protein Vimentin.</title>
        <authorList>
            <person name="Brauksiepe B."/>
            <person name="Mujica A.O."/>
            <person name="Herrmann H."/>
            <person name="Schmidt E.R."/>
        </authorList>
    </citation>
    <scope>INTERACTION WITH STK33</scope>
    <scope>PHOSPHORYLATION BY STK33</scope>
</reference>
<reference key="33">
    <citation type="journal article" date="2008" name="J. Biol. Chem.">
        <title>Protein kinase Cepsilon binds peripherin and induces its aggregation, which is accompanied by apoptosis of neuroblastoma cells.</title>
        <authorList>
            <person name="Sunesson L."/>
            <person name="Hellman U."/>
            <person name="Larsson C."/>
        </authorList>
    </citation>
    <scope>INTERACTION WITH PRKCE</scope>
    <scope>SUBCELLULAR LOCATION</scope>
</reference>
<reference key="34">
    <citation type="journal article" date="2008" name="J. Cell Sci.">
        <title>TorsinA binds the KASH domain of nesprins and participates in linkage between nuclear envelope and cytoskeleton.</title>
        <authorList>
            <person name="Nery F.C."/>
            <person name="Zeng J."/>
            <person name="Niland B.P."/>
            <person name="Hewett J."/>
            <person name="Farley J."/>
            <person name="Irimia D."/>
            <person name="Li Y."/>
            <person name="Wiche G."/>
            <person name="Sonnenberg A."/>
            <person name="Breakefield X.O."/>
        </authorList>
    </citation>
    <scope>INTERACTION WITH TOR1A</scope>
</reference>
<reference key="35">
    <citation type="journal article" date="2008" name="J. Proteome Res.">
        <title>Combining protein-based IMAC, peptide-based IMAC, and MudPIT for efficient phosphoproteomic analysis.</title>
        <authorList>
            <person name="Cantin G.T."/>
            <person name="Yi W."/>
            <person name="Lu B."/>
            <person name="Park S.K."/>
            <person name="Xu T."/>
            <person name="Lee J.-D."/>
            <person name="Yates J.R. III"/>
        </authorList>
    </citation>
    <scope>IDENTIFICATION BY MASS SPECTROMETRY [LARGE SCALE ANALYSIS]</scope>
    <source>
        <tissue>Cervix carcinoma</tissue>
    </source>
</reference>
<reference key="36">
    <citation type="journal article" date="2008" name="Mol. Cell">
        <title>Kinase-selective enrichment enables quantitative phosphoproteomics of the kinome across the cell cycle.</title>
        <authorList>
            <person name="Daub H."/>
            <person name="Olsen J.V."/>
            <person name="Bairlein M."/>
            <person name="Gnad F."/>
            <person name="Oppermann F.S."/>
            <person name="Korner R."/>
            <person name="Greff Z."/>
            <person name="Keri G."/>
            <person name="Stemmann O."/>
            <person name="Mann M."/>
        </authorList>
    </citation>
    <scope>PHOSPHORYLATION [LARGE SCALE ANALYSIS] AT SER-412</scope>
    <scope>IDENTIFICATION BY MASS SPECTROMETRY [LARGE SCALE ANALYSIS]</scope>
    <source>
        <tissue>Cervix carcinoma</tissue>
    </source>
</reference>
<reference key="37">
    <citation type="journal article" date="2008" name="Proc. Natl. Acad. Sci. U.S.A.">
        <title>A quantitative atlas of mitotic phosphorylation.</title>
        <authorList>
            <person name="Dephoure N."/>
            <person name="Zhou C."/>
            <person name="Villen J."/>
            <person name="Beausoleil S.A."/>
            <person name="Bakalarski C.E."/>
            <person name="Elledge S.J."/>
            <person name="Gygi S.P."/>
        </authorList>
    </citation>
    <scope>PHOSPHORYLATION [LARGE SCALE ANALYSIS] AT SER-5; SER-25; SER-34; SER-39; SER-42; SER-51; SER-56; TYR-61; SER-72; SER-73; SER-83; SER-144; SER-409; SER-412 AND SER-459</scope>
    <scope>IDENTIFICATION BY MASS SPECTROMETRY [LARGE SCALE ANALYSIS]</scope>
    <source>
        <tissue>Cervix carcinoma</tissue>
    </source>
</reference>
<reference key="38">
    <citation type="journal article" date="2009" name="Anal. Chem.">
        <title>Lys-N and trypsin cover complementary parts of the phosphoproteome in a refined SCX-based approach.</title>
        <authorList>
            <person name="Gauci S."/>
            <person name="Helbig A.O."/>
            <person name="Slijper M."/>
            <person name="Krijgsveld J."/>
            <person name="Heck A.J."/>
            <person name="Mohammed S."/>
        </authorList>
    </citation>
    <scope>IDENTIFICATION BY MASS SPECTROMETRY [LARGE SCALE ANALYSIS]</scope>
</reference>
<reference key="39">
    <citation type="journal article" date="2009" name="PLoS ONE">
        <title>The cellular distribution of serotonin transporter is impeded on serotonin-altered vimentin network.</title>
        <authorList>
            <person name="Ahmed B.A."/>
            <person name="Bukhari I.A."/>
            <person name="Jeffus B.C."/>
            <person name="Harney J.T."/>
            <person name="Thyparambil S."/>
            <person name="Ziu E."/>
            <person name="Fraer M."/>
            <person name="Rusch N.J."/>
            <person name="Zimniak P."/>
            <person name="Lupashin V."/>
            <person name="Tang D."/>
            <person name="Kilic F."/>
        </authorList>
    </citation>
    <scope>RETRACTED PAPER</scope>
</reference>
<reference key="40">
    <citation type="journal article" date="2019" name="PLoS ONE">
        <title>Retraction: The Cellular Distribution of Serotonin Transporter Is Impeded on Serotonin-Altered Vimentin Network.</title>
        <authorList>
            <person name="Ahmed B.A."/>
            <person name="Bukhari I.A."/>
            <person name="Jeffus B.C."/>
            <person name="Harney J.T."/>
            <person name="Thyparambil S."/>
            <person name="Ziu E."/>
            <person name="Fraer M."/>
            <person name="Rusch N.J."/>
            <person name="Zimniak P."/>
            <person name="Lupashin V."/>
            <person name="Tang D."/>
            <person name="Kilic F."/>
        </authorList>
    </citation>
    <scope>RETRACTION NOTICE OF PUBMED:19270731</scope>
</reference>
<reference key="41">
    <citation type="journal article" date="2009" name="Mol. Biol. Cell">
        <title>Vimentin regulates scribble activity by protecting it from proteasomal degradation.</title>
        <authorList>
            <person name="Phua D.C."/>
            <person name="Humbert P.O."/>
            <person name="Hunziker W."/>
        </authorList>
    </citation>
    <scope>INTERACTION WITH SCRIB</scope>
    <scope>SUBCELLULAR LOCATION</scope>
</reference>
<reference key="42">
    <citation type="journal article" date="2009" name="Sci. Signal.">
        <title>Quantitative phosphoproteomic analysis of T cell receptor signaling reveals system-wide modulation of protein-protein interactions.</title>
        <authorList>
            <person name="Mayya V."/>
            <person name="Lundgren D.H."/>
            <person name="Hwang S.-I."/>
            <person name="Rezaul K."/>
            <person name="Wu L."/>
            <person name="Eng J.K."/>
            <person name="Rodionov V."/>
            <person name="Han D.K."/>
        </authorList>
    </citation>
    <scope>PHOSPHORYLATION [LARGE SCALE ANALYSIS] AT SER-51; SER-56 AND TYR-61</scope>
    <scope>IDENTIFICATION BY MASS SPECTROMETRY [LARGE SCALE ANALYSIS]</scope>
    <source>
        <tissue>Leukemic T-cell</tissue>
    </source>
</reference>
<reference key="43">
    <citation type="journal article" date="2009" name="Science">
        <title>Lysine acetylation targets protein complexes and co-regulates major cellular functions.</title>
        <authorList>
            <person name="Choudhary C."/>
            <person name="Kumar C."/>
            <person name="Gnad F."/>
            <person name="Nielsen M.L."/>
            <person name="Rehman M."/>
            <person name="Walther T.C."/>
            <person name="Olsen J.V."/>
            <person name="Mann M."/>
        </authorList>
    </citation>
    <scope>ACETYLATION [LARGE SCALE ANALYSIS] AT LYS-120; LYS-139; LYS-373 AND LYS-445</scope>
    <scope>IDENTIFICATION BY MASS SPECTROMETRY [LARGE SCALE ANALYSIS]</scope>
</reference>
<reference key="44">
    <citation type="journal article" date="2010" name="Sci. Signal.">
        <title>Extensive crosstalk between O-GlcNAcylation and phosphorylation regulates cytokinesis.</title>
        <authorList>
            <person name="Wang Z."/>
            <person name="Udeshi N.D."/>
            <person name="Slawson C."/>
            <person name="Compton P.D."/>
            <person name="Sakabe K."/>
            <person name="Cheung W.D."/>
            <person name="Shabanowitz J."/>
            <person name="Hunt D.F."/>
            <person name="Hart G.W."/>
        </authorList>
    </citation>
    <scope>GLYCOSYLATION AT SER-7; THR-33 AND SER-34</scope>
</reference>
<reference key="45">
    <citation type="journal article" date="2010" name="Sci. Signal.">
        <title>Quantitative phosphoproteomics reveals widespread full phosphorylation site occupancy during mitosis.</title>
        <authorList>
            <person name="Olsen J.V."/>
            <person name="Vermeulen M."/>
            <person name="Santamaria A."/>
            <person name="Kumar C."/>
            <person name="Miller M.L."/>
            <person name="Jensen L.J."/>
            <person name="Gnad F."/>
            <person name="Cox J."/>
            <person name="Jensen T.S."/>
            <person name="Nigg E.A."/>
            <person name="Brunak S."/>
            <person name="Mann M."/>
        </authorList>
    </citation>
    <scope>PHOSPHORYLATION [LARGE SCALE ANALYSIS] AT THR-20; SER-42; SER-47; SER-51; SER-56; SER-73; SER-83; SER-144; SER-214; SER-226; SER-299; SER-412; SER-419; SER-420; THR-426; SER-430; THR-436 AND SER-459</scope>
    <scope>IDENTIFICATION BY MASS SPECTROMETRY [LARGE SCALE ANALYSIS]</scope>
    <source>
        <tissue>Cervix carcinoma</tissue>
    </source>
</reference>
<reference key="46">
    <citation type="journal article" date="2011" name="BMC Syst. Biol.">
        <title>Initial characterization of the human central proteome.</title>
        <authorList>
            <person name="Burkard T.R."/>
            <person name="Planyavsky M."/>
            <person name="Kaupe I."/>
            <person name="Breitwieser F.P."/>
            <person name="Buerckstuemmer T."/>
            <person name="Bennett K.L."/>
            <person name="Superti-Furga G."/>
            <person name="Colinge J."/>
        </authorList>
    </citation>
    <scope>IDENTIFICATION BY MASS SPECTROMETRY [LARGE SCALE ANALYSIS]</scope>
</reference>
<reference key="47">
    <citation type="journal article" date="2011" name="Mol. Cell. Biol.">
        <title>A novel role of vimentin filaments: binding and stabilization of collagen mRNAs.</title>
        <authorList>
            <person name="Challa A.A."/>
            <person name="Stefanovic B."/>
        </authorList>
    </citation>
    <scope>FUNCTION IN COLLAGEN MRNA STABILIZATION</scope>
    <scope>INTERACTION WITH LARP6</scope>
</reference>
<reference key="48">
    <citation type="journal article" date="2011" name="Sci. Signal.">
        <title>System-wide temporal characterization of the proteome and phosphoproteome of human embryonic stem cell differentiation.</title>
        <authorList>
            <person name="Rigbolt K.T."/>
            <person name="Prokhorova T.A."/>
            <person name="Akimov V."/>
            <person name="Henningsen J."/>
            <person name="Johansen P.T."/>
            <person name="Kratchmarova I."/>
            <person name="Kassem M."/>
            <person name="Mann M."/>
            <person name="Olsen J.V."/>
            <person name="Blagoev B."/>
        </authorList>
    </citation>
    <scope>PHOSPHORYLATION [LARGE SCALE ANALYSIS] AT SER-51; SER-144 AND SER-459</scope>
    <scope>IDENTIFICATION BY MASS SPECTROMETRY [LARGE SCALE ANALYSIS]</scope>
</reference>
<reference key="49">
    <citation type="journal article" date="2012" name="J. Cell. Physiol.">
        <title>Cdk5 mediates vimentin Ser56 phosphorylation during GTP-induced secretion by neutrophils.</title>
        <authorList>
            <person name="Lee K.Y."/>
            <person name="Liu L."/>
            <person name="Jin Y."/>
            <person name="Fu S.B."/>
            <person name="Rosales J.L."/>
        </authorList>
    </citation>
    <scope>PHOSPHORYLATION AT SER-56</scope>
    <scope>SUBCELLULAR LOCATION</scope>
</reference>
<reference key="50">
    <citation type="journal article" date="2012" name="J. Proteome Res.">
        <title>Resveratrol-induced changes of the human adipocyte secretion profile.</title>
        <authorList>
            <person name="Rosenow A."/>
            <person name="Noben J.P."/>
            <person name="Jocken J."/>
            <person name="Kallendrusch S."/>
            <person name="Fischer-Posovszky P."/>
            <person name="Mariman E.C."/>
            <person name="Renes J."/>
        </authorList>
    </citation>
    <scope>IDENTIFICATION BY MASS SPECTROMETRY [LARGE SCALE ANALYSIS]</scope>
</reference>
<reference key="51">
    <citation type="journal article" date="2012" name="Proc. Natl. Acad. Sci. U.S.A.">
        <title>N-terminal acetylome analyses and functional insights of the N-terminal acetyltransferase NatB.</title>
        <authorList>
            <person name="Van Damme P."/>
            <person name="Lasa M."/>
            <person name="Polevoda B."/>
            <person name="Gazquez C."/>
            <person name="Elosegui-Artola A."/>
            <person name="Kim D.S."/>
            <person name="De Juan-Pardo E."/>
            <person name="Demeyer K."/>
            <person name="Hole K."/>
            <person name="Larrea E."/>
            <person name="Timmerman E."/>
            <person name="Prieto J."/>
            <person name="Arnesen T."/>
            <person name="Sherman F."/>
            <person name="Gevaert K."/>
            <person name="Aldabe R."/>
        </authorList>
    </citation>
    <scope>IDENTIFICATION BY MASS SPECTROMETRY [LARGE SCALE ANALYSIS]</scope>
</reference>
<reference key="52">
    <citation type="journal article" date="2013" name="J. Proteome Res.">
        <title>Toward a comprehensive characterization of a human cancer cell phosphoproteome.</title>
        <authorList>
            <person name="Zhou H."/>
            <person name="Di Palma S."/>
            <person name="Preisinger C."/>
            <person name="Peng M."/>
            <person name="Polat A.N."/>
            <person name="Heck A.J."/>
            <person name="Mohammed S."/>
        </authorList>
    </citation>
    <scope>PHOSPHORYLATION [LARGE SCALE ANALYSIS] AT SER-25; SER-26; SER-39; SER-42; SER-47; SER-49; SER-51; SER-56; TYR-61; SER-66; SER-73; SER-214; SER-226; SER-299; SER-419; SER-420; SER-430; THR-436; SER-438; THR-446 AND SER-459</scope>
    <scope>IDENTIFICATION BY MASS SPECTROMETRY [LARGE SCALE ANALYSIS]</scope>
    <source>
        <tissue>Cervix carcinoma</tissue>
        <tissue>Erythroleukemia</tissue>
    </source>
</reference>
<reference key="53">
    <citation type="journal article" date="2013" name="Mol. Biol. Cell">
        <title>cAMP-stimulated phosphorylation of diaphanous 1 regulates protein stability and interaction with binding partners in adrenocortical cells.</title>
        <authorList>
            <person name="Li D."/>
            <person name="Dammer E.B."/>
            <person name="Lucki N.C."/>
            <person name="Sewer M.B."/>
        </authorList>
    </citation>
    <scope>INTERACTION WITH DIAPH1</scope>
    <scope>IDENTIFICATION BY MASS SPECTROMETRY</scope>
</reference>
<reference key="54">
    <citation type="journal article" date="2014" name="Cell">
        <title>Target-selective protein S-nitrosylation by sequence motif recognition.</title>
        <authorList>
            <person name="Jia J."/>
            <person name="Arif A."/>
            <person name="Terenzi F."/>
            <person name="Willard B."/>
            <person name="Plow E.F."/>
            <person name="Hazen S.L."/>
            <person name="Fox P.L."/>
        </authorList>
    </citation>
    <scope>S-NITROSYLATION</scope>
    <scope>DOMAIN</scope>
</reference>
<reference key="55">
    <citation type="journal article" date="2014" name="J. Invest. Dermatol.">
        <title>Interaction of plectin with keratins 5 and 14: dependence on several plectin domains and keratin quaternary structure.</title>
        <authorList>
            <person name="Bouameur J.E."/>
            <person name="Favre B."/>
            <person name="Fontao L."/>
            <person name="Lingasamy P."/>
            <person name="Begre N."/>
            <person name="Borradori L."/>
        </authorList>
    </citation>
    <scope>INTERACTION WITH PLEC</scope>
</reference>
<reference key="56">
    <citation type="journal article" date="2014" name="J. Proteomics">
        <title>An enzyme assisted RP-RPLC approach for in-depth analysis of human liver phosphoproteome.</title>
        <authorList>
            <person name="Bian Y."/>
            <person name="Song C."/>
            <person name="Cheng K."/>
            <person name="Dong M."/>
            <person name="Wang F."/>
            <person name="Huang J."/>
            <person name="Sun D."/>
            <person name="Wang L."/>
            <person name="Ye M."/>
            <person name="Zou H."/>
        </authorList>
    </citation>
    <scope>PHOSPHORYLATION [LARGE SCALE ANALYSIS] AT THR-20; SER-25; SER-39; SER-83; SER-87; SER-214; SER-419; THR-426 AND SER-430</scope>
    <scope>IDENTIFICATION BY MASS SPECTROMETRY [LARGE SCALE ANALYSIS]</scope>
    <source>
        <tissue>Liver</tissue>
    </source>
</reference>
<reference key="57">
    <citation type="journal article" date="2014" name="Proc. Natl. Acad. Sci. U.S.A.">
        <title>Mapping of SUMO sites and analysis of SUMOylation changes induced by external stimuli.</title>
        <authorList>
            <person name="Impens F."/>
            <person name="Radoshevich L."/>
            <person name="Cossart P."/>
            <person name="Ribet D."/>
        </authorList>
    </citation>
    <scope>SUMOYLATION [LARGE SCALE ANALYSIS] AT LYS-445</scope>
    <scope>IDENTIFICATION BY MASS SPECTROMETRY [LARGE SCALE ANALYSIS]</scope>
</reference>
<reference key="58">
    <citation type="journal article" date="2015" name="Proteomics">
        <title>N-terminome analysis of the human mitochondrial proteome.</title>
        <authorList>
            <person name="Vaca Jacome A.S."/>
            <person name="Rabilloud T."/>
            <person name="Schaeffer-Reiss C."/>
            <person name="Rompais M."/>
            <person name="Ayoub D."/>
            <person name="Lane L."/>
            <person name="Bairoch A."/>
            <person name="Van Dorsselaer A."/>
            <person name="Carapito C."/>
        </authorList>
    </citation>
    <scope>IDENTIFICATION BY MASS SPECTROMETRY [LARGE SCALE ANALYSIS]</scope>
</reference>
<reference key="59">
    <citation type="journal article" date="2016" name="Biol. Chem.">
        <title>Two new isoforms of the human hepatoma-derived growth factor interact with components of the cytoskeleton.</title>
        <authorList>
            <person name="Nuesse J."/>
            <person name="Mirastschijski U."/>
            <person name="Waespy M."/>
            <person name="Oetjen J."/>
            <person name="Brandes N."/>
            <person name="Rebello O."/>
            <person name="Paroni F."/>
            <person name="Kelm S."/>
            <person name="Dietz F."/>
        </authorList>
    </citation>
    <scope>INTERACTION WITH HDGF</scope>
</reference>
<reference key="60">
    <citation type="journal article" date="2016" name="Hum. Mutat.">
        <title>Sporadic and familial congenital cataracts: mutational spectrum and new diagnoses using next-generation sequencing.</title>
        <authorList>
            <person name="Ma A.S."/>
            <person name="Grigg J.R."/>
            <person name="Ho G."/>
            <person name="Prokudin I."/>
            <person name="Farnsworth E."/>
            <person name="Holman K."/>
            <person name="Cheng A."/>
            <person name="Billson F.A."/>
            <person name="Martin F."/>
            <person name="Fraser C."/>
            <person name="Mowat D."/>
            <person name="Smith J."/>
            <person name="Christodoulou J."/>
            <person name="Flaherty M."/>
            <person name="Bennetts B."/>
            <person name="Jamieson R.V."/>
        </authorList>
    </citation>
    <scope>INVOLVEMENT IN CTRCT30</scope>
</reference>
<reference key="61">
    <citation type="journal article" date="2016" name="PLoS ONE">
        <title>Characterization and Genetic Analyses of New Genes Coding for NOD2 Interacting Proteins.</title>
        <authorList>
            <person name="Thiebaut R."/>
            <person name="Esmiol S."/>
            <person name="Lecine P."/>
            <person name="Mahfouz B."/>
            <person name="Hermant A."/>
            <person name="Nicoletti C."/>
            <person name="Parnis S."/>
            <person name="Perroy J."/>
            <person name="Borg J.P."/>
            <person name="Pascoe L."/>
            <person name="Hugot J.P."/>
            <person name="Ollendorff V."/>
        </authorList>
    </citation>
    <scope>INTERACTION WITH NOD2</scope>
    <scope>INDUCTION</scope>
</reference>
<reference key="62">
    <citation type="journal article" date="2017" name="Nat. Struct. Mol. Biol.">
        <title>Site-specific mapping of the human SUMO proteome reveals co-modification with phosphorylation.</title>
        <authorList>
            <person name="Hendriks I.A."/>
            <person name="Lyon D."/>
            <person name="Young C."/>
            <person name="Jensen L.J."/>
            <person name="Vertegaal A.C."/>
            <person name="Nielsen M.L."/>
        </authorList>
    </citation>
    <scope>SUMOYLATION [LARGE SCALE ANALYSIS] AT LYS-104; LYS-120; LYS-129; LYS-139; LYS-223; LYS-262; LYS-294; LYS-313; LYS-373; LYS-439 AND LYS-445</scope>
    <scope>IDENTIFICATION BY MASS SPECTROMETRY [LARGE SCALE ANALYSIS]</scope>
</reference>
<reference key="63">
    <citation type="journal article" date="2018" name="Mol. Cell. Proteomics">
        <title>Phosphoproteomics analysis identifies novel candidate substrates of the non-receptor tyrosine kinase, SRMS.</title>
        <authorList>
            <person name="Goel R.K."/>
            <person name="Paczkowska M."/>
            <person name="Reimand J."/>
            <person name="Napper S."/>
            <person name="Lukong K.E."/>
        </authorList>
    </citation>
    <scope>INTERACTION WITH SRMS</scope>
    <scope>SUBCELLULAR LOCATION</scope>
    <scope>PHOSPHORYLATION</scope>
</reference>
<reference key="64">
    <citation type="journal article" date="2020" name="Virus Res.">
        <title>Role of cell surface vimentin in Chandipura virus replication in Neuro-2a cells.</title>
        <authorList>
            <person name="Kavathekar V.K."/>
            <person name="Dhanavade M.J."/>
            <person name="Sonawane K.D."/>
            <person name="Balakrishnan A."/>
        </authorList>
    </citation>
    <scope>INTERACTION WITH CHANDIPURA VIRUS GLYCOPROTEIN (MICROBIAL INFECTION)</scope>
</reference>
<reference key="65">
    <citation type="journal article" date="2001" name="J. Mol. Biol.">
        <title>Divide-and-conquer crystallographic approach towards an atomic structure of intermediate filaments.</title>
        <authorList>
            <person name="Strelkov S.V."/>
            <person name="Herrmann H."/>
            <person name="Geisler N."/>
            <person name="Lustig A."/>
            <person name="Ivaninskii S."/>
            <person name="Zimbelmann R."/>
            <person name="Burkhard P."/>
            <person name="Aebi U."/>
        </authorList>
    </citation>
    <scope>X-RAY CRYSTALLOGRAPHY (1.4 ANGSTROMS) OF 102-138</scope>
</reference>
<reference key="66">
    <citation type="journal article" date="2002" name="EMBO J.">
        <title>Conserved segments 1A and 2B of the intermediate filament dimer: their atomic structures and role in filament assembly.</title>
        <authorList>
            <person name="Strelkov S.V."/>
            <person name="Herrmann H."/>
            <person name="Geisler N."/>
            <person name="Wedig T."/>
            <person name="Zimbelmann R."/>
            <person name="Aebi U."/>
            <person name="Burkhard P."/>
        </authorList>
    </citation>
    <scope>X-RAY CRYSTALLOGRAPHY (1.4 ANGSTROMS) OF 103-139 AND 328-411</scope>
</reference>
<reference key="67">
    <citation type="journal article" date="2010" name="J. Struct. Biol.">
        <title>Atomic structure of vimentin coil 2.</title>
        <authorList>
            <person name="Nicolet S."/>
            <person name="Herrmann H."/>
            <person name="Aebi U."/>
            <person name="Strelkov S.V."/>
        </authorList>
    </citation>
    <scope>X-RAY CRYSTALLOGRAPHY (2.7 ANGSTROMS) OF 263-334</scope>
    <scope>COILED-COIL DOMAINS</scope>
    <scope>SUBUNIT</scope>
</reference>
<reference key="68">
    <citation type="journal article" date="2012" name="J. Struct. Biol.">
        <title>Stabilization of vimentin coil2 fragment via an engineered disulfide.</title>
        <authorList>
            <person name="Chernyatina A.A."/>
            <person name="Strelkov S.V."/>
        </authorList>
    </citation>
    <scope>X-RAY CRYSTALLOGRAPHY (2.3 ANGSTROMS) OF 261-335 OF MUTANT CYS-265</scope>
</reference>
<reference key="69">
    <citation type="journal article" date="2009" name="Hum. Mol. Genet.">
        <title>Dominant cataract formation in association with a vimentin assembly disrupting mutation.</title>
        <authorList>
            <person name="Muller M."/>
            <person name="Bhattacharya S.S."/>
            <person name="Moore T."/>
            <person name="Prescott Q."/>
            <person name="Wedig T."/>
            <person name="Herrmann H."/>
            <person name="Magin T.M."/>
        </authorList>
    </citation>
    <scope>VARIANT CTRCT30 LYS-151</scope>
    <scope>CHARACTERIZATION OF VARIANT CTRCT30 LYS-151</scope>
</reference>
<reference key="70">
    <citation type="journal article" date="2017" name="Sci. Rep.">
        <title>Targeted exome sequencing of congenital cataracts related genes: broadening the mutation spectrum and genotype-phenotype correlations in 27 Chinese Han families.</title>
        <authorList>
            <person name="Zhai Y."/>
            <person name="Li J."/>
            <person name="Yu W."/>
            <person name="Zhu S."/>
            <person name="Yu Y."/>
            <person name="Wu M."/>
            <person name="Sun G."/>
            <person name="Gong X."/>
            <person name="Yao K."/>
        </authorList>
    </citation>
    <scope>VARIANT CTRCT30 ARG-208</scope>
</reference>
<dbReference type="EMBL" id="M14144">
    <property type="protein sequence ID" value="AAA61279.1"/>
    <property type="molecule type" value="Genomic_DNA"/>
</dbReference>
<dbReference type="EMBL" id="X56134">
    <property type="protein sequence ID" value="CAA39600.1"/>
    <property type="molecule type" value="mRNA"/>
</dbReference>
<dbReference type="EMBL" id="AF328728">
    <property type="protein sequence ID" value="AAN09720.1"/>
    <property type="molecule type" value="mRNA"/>
</dbReference>
<dbReference type="EMBL" id="Z19554">
    <property type="protein sequence ID" value="CAA79613.2"/>
    <property type="molecule type" value="mRNA"/>
</dbReference>
<dbReference type="EMBL" id="AK056766">
    <property type="protein sequence ID" value="BAB71275.1"/>
    <property type="status" value="ALT_SEQ"/>
    <property type="molecule type" value="mRNA"/>
</dbReference>
<dbReference type="EMBL" id="AK097336">
    <property type="protein sequence ID" value="BAC05002.1"/>
    <property type="molecule type" value="mRNA"/>
</dbReference>
<dbReference type="EMBL" id="AK290643">
    <property type="protein sequence ID" value="BAF83332.1"/>
    <property type="molecule type" value="mRNA"/>
</dbReference>
<dbReference type="EMBL" id="CR407690">
    <property type="protein sequence ID" value="CAG28618.1"/>
    <property type="molecule type" value="mRNA"/>
</dbReference>
<dbReference type="EMBL" id="AK222507">
    <property type="protein sequence ID" value="BAD96227.1"/>
    <property type="molecule type" value="mRNA"/>
</dbReference>
<dbReference type="EMBL" id="AK222602">
    <property type="protein sequence ID" value="BAD96322.1"/>
    <property type="molecule type" value="mRNA"/>
</dbReference>
<dbReference type="EMBL" id="EF445046">
    <property type="protein sequence ID" value="ACA06101.1"/>
    <property type="molecule type" value="Genomic_DNA"/>
</dbReference>
<dbReference type="EMBL" id="EF445046">
    <property type="protein sequence ID" value="ACA06102.1"/>
    <property type="molecule type" value="Genomic_DNA"/>
</dbReference>
<dbReference type="EMBL" id="AL133415">
    <property type="status" value="NOT_ANNOTATED_CDS"/>
    <property type="molecule type" value="Genomic_DNA"/>
</dbReference>
<dbReference type="EMBL" id="CH471072">
    <property type="protein sequence ID" value="EAW86215.1"/>
    <property type="molecule type" value="Genomic_DNA"/>
</dbReference>
<dbReference type="EMBL" id="CH471072">
    <property type="protein sequence ID" value="EAW86216.1"/>
    <property type="molecule type" value="Genomic_DNA"/>
</dbReference>
<dbReference type="EMBL" id="BC000163">
    <property type="protein sequence ID" value="AAH00163.2"/>
    <property type="molecule type" value="mRNA"/>
</dbReference>
<dbReference type="EMBL" id="BC030573">
    <property type="protein sequence ID" value="AAH30573.1"/>
    <property type="molecule type" value="mRNA"/>
</dbReference>
<dbReference type="EMBL" id="BC066956">
    <property type="protein sequence ID" value="AAH66956.1"/>
    <property type="molecule type" value="mRNA"/>
</dbReference>
<dbReference type="EMBL" id="X16478">
    <property type="protein sequence ID" value="CAA34499.1"/>
    <property type="molecule type" value="mRNA"/>
</dbReference>
<dbReference type="EMBL" id="M18895">
    <property type="protein sequence ID" value="AAA61281.2"/>
    <property type="molecule type" value="Genomic_DNA"/>
</dbReference>
<dbReference type="EMBL" id="M18888">
    <property type="protein sequence ID" value="AAA61281.2"/>
    <property type="status" value="JOINED"/>
    <property type="molecule type" value="Genomic_DNA"/>
</dbReference>
<dbReference type="EMBL" id="M18889">
    <property type="protein sequence ID" value="AAA61281.2"/>
    <property type="status" value="JOINED"/>
    <property type="molecule type" value="Genomic_DNA"/>
</dbReference>
<dbReference type="EMBL" id="M18890">
    <property type="protein sequence ID" value="AAA61281.2"/>
    <property type="status" value="JOINED"/>
    <property type="molecule type" value="Genomic_DNA"/>
</dbReference>
<dbReference type="EMBL" id="M18891">
    <property type="protein sequence ID" value="AAA61281.2"/>
    <property type="status" value="JOINED"/>
    <property type="molecule type" value="Genomic_DNA"/>
</dbReference>
<dbReference type="EMBL" id="M18892">
    <property type="protein sequence ID" value="AAA61281.2"/>
    <property type="status" value="JOINED"/>
    <property type="molecule type" value="Genomic_DNA"/>
</dbReference>
<dbReference type="EMBL" id="M18893">
    <property type="protein sequence ID" value="AAA61281.2"/>
    <property type="status" value="JOINED"/>
    <property type="molecule type" value="Genomic_DNA"/>
</dbReference>
<dbReference type="EMBL" id="M18894">
    <property type="protein sequence ID" value="AAA61281.2"/>
    <property type="status" value="JOINED"/>
    <property type="molecule type" value="Genomic_DNA"/>
</dbReference>
<dbReference type="EMBL" id="M25246">
    <property type="protein sequence ID" value="AAA61282.1"/>
    <property type="molecule type" value="mRNA"/>
</dbReference>
<dbReference type="CCDS" id="CCDS7120.1"/>
<dbReference type="PIR" id="S13115">
    <property type="entry name" value="A25074"/>
</dbReference>
<dbReference type="RefSeq" id="NP_003371.2">
    <property type="nucleotide sequence ID" value="NM_003380.5"/>
</dbReference>
<dbReference type="RefSeq" id="XP_006717563.1">
    <property type="nucleotide sequence ID" value="XM_006717500.1"/>
</dbReference>
<dbReference type="PDB" id="1GK4">
    <property type="method" value="X-ray"/>
    <property type="resolution" value="2.30 A"/>
    <property type="chains" value="A/B/C/D/E/F=328-411"/>
</dbReference>
<dbReference type="PDB" id="1GK6">
    <property type="method" value="X-ray"/>
    <property type="resolution" value="1.90 A"/>
    <property type="chains" value="A/B=385-412"/>
</dbReference>
<dbReference type="PDB" id="1GK7">
    <property type="method" value="X-ray"/>
    <property type="resolution" value="1.40 A"/>
    <property type="chains" value="A=102-138"/>
</dbReference>
<dbReference type="PDB" id="3G1E">
    <property type="method" value="X-ray"/>
    <property type="resolution" value="1.83 A"/>
    <property type="chains" value="A/B=102-138"/>
</dbReference>
<dbReference type="PDB" id="3KLT">
    <property type="method" value="X-ray"/>
    <property type="resolution" value="2.70 A"/>
    <property type="chains" value="A/B/C/D=263-334"/>
</dbReference>
<dbReference type="PDB" id="3S4R">
    <property type="method" value="X-ray"/>
    <property type="resolution" value="2.45 A"/>
    <property type="chains" value="A/B=99-189"/>
</dbReference>
<dbReference type="PDB" id="3SSU">
    <property type="method" value="X-ray"/>
    <property type="resolution" value="2.60 A"/>
    <property type="chains" value="A/B=99-189"/>
</dbReference>
<dbReference type="PDB" id="3SWK">
    <property type="method" value="X-ray"/>
    <property type="resolution" value="1.70 A"/>
    <property type="chains" value="A/B=153-238"/>
</dbReference>
<dbReference type="PDB" id="3TRT">
    <property type="method" value="X-ray"/>
    <property type="resolution" value="2.30 A"/>
    <property type="chains" value="A/B=261-335"/>
</dbReference>
<dbReference type="PDB" id="3UF1">
    <property type="method" value="X-ray"/>
    <property type="resolution" value="2.81 A"/>
    <property type="chains" value="A/B/C/D=144-251"/>
</dbReference>
<dbReference type="PDB" id="4MCY">
    <property type="method" value="X-ray"/>
    <property type="resolution" value="2.30 A"/>
    <property type="chains" value="C=66-78"/>
</dbReference>
<dbReference type="PDB" id="4MCZ">
    <property type="method" value="X-ray"/>
    <property type="resolution" value="2.41 A"/>
    <property type="chains" value="C=59-71"/>
</dbReference>
<dbReference type="PDB" id="4MD0">
    <property type="method" value="X-ray"/>
    <property type="resolution" value="2.19 A"/>
    <property type="chains" value="C=59-71"/>
</dbReference>
<dbReference type="PDB" id="4MD5">
    <property type="method" value="X-ray"/>
    <property type="resolution" value="1.65 A"/>
    <property type="chains" value="C=66-78"/>
</dbReference>
<dbReference type="PDB" id="4MDI">
    <property type="method" value="X-ray"/>
    <property type="resolution" value="2.00 A"/>
    <property type="chains" value="C=66-78"/>
</dbReference>
<dbReference type="PDB" id="4MDJ">
    <property type="method" value="X-ray"/>
    <property type="resolution" value="1.70 A"/>
    <property type="chains" value="C=66-78"/>
</dbReference>
<dbReference type="PDB" id="4YPC">
    <property type="method" value="X-ray"/>
    <property type="resolution" value="1.44 A"/>
    <property type="chains" value="A=161-243"/>
</dbReference>
<dbReference type="PDB" id="4YV3">
    <property type="method" value="X-ray"/>
    <property type="resolution" value="2.00 A"/>
    <property type="chains" value="A/B/C=161-238"/>
</dbReference>
<dbReference type="PDB" id="5WHF">
    <property type="method" value="X-ray"/>
    <property type="resolution" value="2.25 A"/>
    <property type="chains" value="A/B/C/D/E/F/G/H=153-238"/>
</dbReference>
<dbReference type="PDB" id="6ATF">
    <property type="method" value="X-ray"/>
    <property type="resolution" value="1.90 A"/>
    <property type="chains" value="C/F=59-71"/>
</dbReference>
<dbReference type="PDB" id="6ATI">
    <property type="method" value="X-ray"/>
    <property type="resolution" value="1.98 A"/>
    <property type="chains" value="C/F=59-71"/>
</dbReference>
<dbReference type="PDB" id="6BIR">
    <property type="method" value="X-ray"/>
    <property type="resolution" value="2.30 A"/>
    <property type="chains" value="C=419-431"/>
</dbReference>
<dbReference type="PDB" id="6YXK">
    <property type="method" value="X-ray"/>
    <property type="resolution" value="2.00 A"/>
    <property type="chains" value="C=59-74"/>
</dbReference>
<dbReference type="PDB" id="8RVE">
    <property type="method" value="EM"/>
    <property type="resolution" value="7.20 A"/>
    <property type="chains" value="0/1/2/3/4/5/6/7/8/9/A/AA/AB/AC/AD/AE/AF/AG/AH/AI/AJ/AK/AL/AM/AN/AO/AP/B/C/D=1-466"/>
</dbReference>
<dbReference type="PDB" id="8TRQ">
    <property type="method" value="X-ray"/>
    <property type="resolution" value="2.75 A"/>
    <property type="chains" value="C=59-71"/>
</dbReference>
<dbReference type="PDB" id="8TRR">
    <property type="method" value="X-ray"/>
    <property type="resolution" value="2.65 A"/>
    <property type="chains" value="C/H=59-71"/>
</dbReference>
<dbReference type="PDBsum" id="1GK4"/>
<dbReference type="PDBsum" id="1GK6"/>
<dbReference type="PDBsum" id="1GK7"/>
<dbReference type="PDBsum" id="3G1E"/>
<dbReference type="PDBsum" id="3KLT"/>
<dbReference type="PDBsum" id="3S4R"/>
<dbReference type="PDBsum" id="3SSU"/>
<dbReference type="PDBsum" id="3SWK"/>
<dbReference type="PDBsum" id="3TRT"/>
<dbReference type="PDBsum" id="3UF1"/>
<dbReference type="PDBsum" id="4MCY"/>
<dbReference type="PDBsum" id="4MCZ"/>
<dbReference type="PDBsum" id="4MD0"/>
<dbReference type="PDBsum" id="4MD5"/>
<dbReference type="PDBsum" id="4MDI"/>
<dbReference type="PDBsum" id="4MDJ"/>
<dbReference type="PDBsum" id="4YPC"/>
<dbReference type="PDBsum" id="4YV3"/>
<dbReference type="PDBsum" id="5WHF"/>
<dbReference type="PDBsum" id="6ATF"/>
<dbReference type="PDBsum" id="6ATI"/>
<dbReference type="PDBsum" id="6BIR"/>
<dbReference type="PDBsum" id="6YXK"/>
<dbReference type="PDBsum" id="8RVE"/>
<dbReference type="PDBsum" id="8TRQ"/>
<dbReference type="PDBsum" id="8TRR"/>
<dbReference type="EMDB" id="EMD-19562"/>
<dbReference type="EMDB" id="EMD-19563"/>
<dbReference type="SMR" id="P08670"/>
<dbReference type="BioGRID" id="113272">
    <property type="interactions" value="826"/>
</dbReference>
<dbReference type="CORUM" id="P08670"/>
<dbReference type="DIP" id="DIP-32507N"/>
<dbReference type="FunCoup" id="P08670">
    <property type="interactions" value="815"/>
</dbReference>
<dbReference type="IntAct" id="P08670">
    <property type="interactions" value="399"/>
</dbReference>
<dbReference type="MINT" id="P08670"/>
<dbReference type="STRING" id="9606.ENSP00000446007"/>
<dbReference type="BindingDB" id="P08670"/>
<dbReference type="ChEMBL" id="CHEMBL3712854"/>
<dbReference type="DrugBank" id="DB11638">
    <property type="generic name" value="Artenimol"/>
</dbReference>
<dbReference type="DrugBank" id="DB12695">
    <property type="generic name" value="Phenethyl Isothiocyanate"/>
</dbReference>
<dbReference type="MoonDB" id="P08670">
    <property type="type" value="Predicted"/>
</dbReference>
<dbReference type="CarbonylDB" id="P08670"/>
<dbReference type="GlyConnect" id="2867">
    <property type="glycosylation" value="1 O-GlcNAc glycan (3 sites)"/>
</dbReference>
<dbReference type="GlyCosmos" id="P08670">
    <property type="glycosylation" value="17 sites, 2 glycans"/>
</dbReference>
<dbReference type="GlyGen" id="P08670">
    <property type="glycosylation" value="27 sites, 2 N-linked glycans (2 sites), 2 O-linked glycans (24 sites)"/>
</dbReference>
<dbReference type="iPTMnet" id="P08670"/>
<dbReference type="MetOSite" id="P08670"/>
<dbReference type="PhosphoSitePlus" id="P08670"/>
<dbReference type="SwissPalm" id="P08670"/>
<dbReference type="BioMuta" id="VIM"/>
<dbReference type="DMDM" id="55977767"/>
<dbReference type="OGP" id="P08670"/>
<dbReference type="REPRODUCTION-2DPAGE" id="IPI00418471"/>
<dbReference type="REPRODUCTION-2DPAGE" id="P08670"/>
<dbReference type="CPTAC" id="CPTAC-1017"/>
<dbReference type="CPTAC" id="CPTAC-1018"/>
<dbReference type="CPTAC" id="CPTAC-1036"/>
<dbReference type="CPTAC" id="CPTAC-1303"/>
<dbReference type="CPTAC" id="CPTAC-297"/>
<dbReference type="CPTAC" id="CPTAC-298"/>
<dbReference type="jPOST" id="P08670"/>
<dbReference type="MassIVE" id="P08670"/>
<dbReference type="PaxDb" id="9606-ENSP00000446007"/>
<dbReference type="PeptideAtlas" id="P08670"/>
<dbReference type="PRIDE" id="P08670"/>
<dbReference type="ProteomicsDB" id="52153"/>
<dbReference type="Pumba" id="P08670"/>
<dbReference type="TopDownProteomics" id="P08670"/>
<dbReference type="ABCD" id="P08670">
    <property type="antibodies" value="18 sequenced antibodies"/>
</dbReference>
<dbReference type="Antibodypedia" id="938">
    <property type="antibodies" value="3740 antibodies from 61 providers"/>
</dbReference>
<dbReference type="DNASU" id="7431"/>
<dbReference type="Ensembl" id="ENST00000224237.9">
    <property type="protein sequence ID" value="ENSP00000224237.5"/>
    <property type="gene ID" value="ENSG00000026025.16"/>
</dbReference>
<dbReference type="Ensembl" id="ENST00000544301.7">
    <property type="protein sequence ID" value="ENSP00000446007.1"/>
    <property type="gene ID" value="ENSG00000026025.16"/>
</dbReference>
<dbReference type="GeneID" id="7431"/>
<dbReference type="KEGG" id="hsa:7431"/>
<dbReference type="MANE-Select" id="ENST00000544301.7">
    <property type="protein sequence ID" value="ENSP00000446007.1"/>
    <property type="RefSeq nucleotide sequence ID" value="NM_003380.5"/>
    <property type="RefSeq protein sequence ID" value="NP_003371.2"/>
</dbReference>
<dbReference type="AGR" id="HGNC:12692"/>
<dbReference type="CTD" id="7431"/>
<dbReference type="DisGeNET" id="7431"/>
<dbReference type="GeneCards" id="VIM"/>
<dbReference type="HGNC" id="HGNC:12692">
    <property type="gene designation" value="VIM"/>
</dbReference>
<dbReference type="HPA" id="ENSG00000026025">
    <property type="expression patterns" value="Low tissue specificity"/>
</dbReference>
<dbReference type="MalaCards" id="VIM"/>
<dbReference type="MIM" id="116300">
    <property type="type" value="phenotype"/>
</dbReference>
<dbReference type="MIM" id="193060">
    <property type="type" value="gene"/>
</dbReference>
<dbReference type="neXtProt" id="NX_P08670"/>
<dbReference type="OpenTargets" id="ENSG00000026025"/>
<dbReference type="Orphanet" id="675396">
    <property type="disease" value="Epithelioid hemangioma"/>
</dbReference>
<dbReference type="Orphanet" id="98984">
    <property type="disease" value="Pulverulent cataract"/>
</dbReference>
<dbReference type="PharmGKB" id="PA37311"/>
<dbReference type="VEuPathDB" id="HostDB:ENSG00000026025"/>
<dbReference type="eggNOG" id="KOG0977">
    <property type="taxonomic scope" value="Eukaryota"/>
</dbReference>
<dbReference type="GeneTree" id="ENSGT00940000156146"/>
<dbReference type="InParanoid" id="P08670"/>
<dbReference type="OMA" id="GGMYATK"/>
<dbReference type="OrthoDB" id="2441647at2759"/>
<dbReference type="PAN-GO" id="P08670">
    <property type="GO annotations" value="6 GO annotations based on evolutionary models"/>
</dbReference>
<dbReference type="PhylomeDB" id="P08670"/>
<dbReference type="TreeFam" id="TF330122"/>
<dbReference type="PathwayCommons" id="P08670"/>
<dbReference type="Reactome" id="R-HSA-264870">
    <property type="pathway name" value="Caspase-mediated cleavage of cytoskeletal proteins"/>
</dbReference>
<dbReference type="Reactome" id="R-HSA-390522">
    <property type="pathway name" value="Striated Muscle Contraction"/>
</dbReference>
<dbReference type="Reactome" id="R-HSA-6785807">
    <property type="pathway name" value="Interleukin-4 and Interleukin-13 signaling"/>
</dbReference>
<dbReference type="Reactome" id="R-HSA-9013422">
    <property type="pathway name" value="RHOBTB1 GTPase cycle"/>
</dbReference>
<dbReference type="Reactome" id="R-HSA-9613829">
    <property type="pathway name" value="Chaperone Mediated Autophagy"/>
</dbReference>
<dbReference type="Reactome" id="R-HSA-9615710">
    <property type="pathway name" value="Late endosomal microautophagy"/>
</dbReference>
<dbReference type="Reactome" id="R-HSA-9646399">
    <property type="pathway name" value="Aggrephagy"/>
</dbReference>
<dbReference type="SignaLink" id="P08670"/>
<dbReference type="SIGNOR" id="P08670"/>
<dbReference type="BioGRID-ORCS" id="7431">
    <property type="hits" value="9 hits in 1163 CRISPR screens"/>
</dbReference>
<dbReference type="CD-CODE" id="91857CE7">
    <property type="entry name" value="Nucleolus"/>
</dbReference>
<dbReference type="CD-CODE" id="FB4E32DD">
    <property type="entry name" value="Presynaptic clusters and postsynaptic densities"/>
</dbReference>
<dbReference type="ChiTaRS" id="VIM">
    <property type="organism name" value="human"/>
</dbReference>
<dbReference type="EvolutionaryTrace" id="P08670"/>
<dbReference type="GeneWiki" id="Vimentin"/>
<dbReference type="GenomeRNAi" id="7431"/>
<dbReference type="Pharos" id="P08670">
    <property type="development level" value="Tbio"/>
</dbReference>
<dbReference type="PRO" id="PR:P08670"/>
<dbReference type="Proteomes" id="UP000005640">
    <property type="component" value="Chromosome 10"/>
</dbReference>
<dbReference type="RNAct" id="P08670">
    <property type="molecule type" value="protein"/>
</dbReference>
<dbReference type="Bgee" id="ENSG00000026025">
    <property type="expression patterns" value="Expressed in ventricular zone and 216 other cell types or tissues"/>
</dbReference>
<dbReference type="ExpressionAtlas" id="P08670">
    <property type="expression patterns" value="baseline and differential"/>
</dbReference>
<dbReference type="GO" id="GO:0030424">
    <property type="term" value="C:axon"/>
    <property type="evidence" value="ECO:0000318"/>
    <property type="project" value="GO_Central"/>
</dbReference>
<dbReference type="GO" id="GO:0031252">
    <property type="term" value="C:cell leading edge"/>
    <property type="evidence" value="ECO:0007669"/>
    <property type="project" value="Ensembl"/>
</dbReference>
<dbReference type="GO" id="GO:0005737">
    <property type="term" value="C:cytoplasm"/>
    <property type="evidence" value="ECO:0000314"/>
    <property type="project" value="UniProtKB"/>
</dbReference>
<dbReference type="GO" id="GO:0005856">
    <property type="term" value="C:cytoskeleton"/>
    <property type="evidence" value="ECO:0000314"/>
    <property type="project" value="MGI"/>
</dbReference>
<dbReference type="GO" id="GO:0005829">
    <property type="term" value="C:cytosol"/>
    <property type="evidence" value="ECO:0000314"/>
    <property type="project" value="UniProtKB"/>
</dbReference>
<dbReference type="GO" id="GO:0070062">
    <property type="term" value="C:extracellular exosome"/>
    <property type="evidence" value="ECO:0007005"/>
    <property type="project" value="UniProtKB"/>
</dbReference>
<dbReference type="GO" id="GO:0005925">
    <property type="term" value="C:focal adhesion"/>
    <property type="evidence" value="ECO:0007005"/>
    <property type="project" value="UniProtKB"/>
</dbReference>
<dbReference type="GO" id="GO:0005882">
    <property type="term" value="C:intermediate filament"/>
    <property type="evidence" value="ECO:0000314"/>
    <property type="project" value="UniProtKB"/>
</dbReference>
<dbReference type="GO" id="GO:0045111">
    <property type="term" value="C:intermediate filament cytoskeleton"/>
    <property type="evidence" value="ECO:0000314"/>
    <property type="project" value="HPA"/>
</dbReference>
<dbReference type="GO" id="GO:0005815">
    <property type="term" value="C:microtubule organizing center"/>
    <property type="evidence" value="ECO:0000304"/>
    <property type="project" value="Reactome"/>
</dbReference>
<dbReference type="GO" id="GO:0016363">
    <property type="term" value="C:nuclear matrix"/>
    <property type="evidence" value="ECO:0007669"/>
    <property type="project" value="UniProtKB-SubCell"/>
</dbReference>
<dbReference type="GO" id="GO:0005777">
    <property type="term" value="C:peroxisome"/>
    <property type="evidence" value="ECO:0000314"/>
    <property type="project" value="UniProtKB"/>
</dbReference>
<dbReference type="GO" id="GO:0045335">
    <property type="term" value="C:phagocytic vesicle"/>
    <property type="evidence" value="ECO:0007669"/>
    <property type="project" value="Ensembl"/>
</dbReference>
<dbReference type="GO" id="GO:0005886">
    <property type="term" value="C:plasma membrane"/>
    <property type="evidence" value="ECO:0000250"/>
    <property type="project" value="UniProtKB"/>
</dbReference>
<dbReference type="GO" id="GO:0003725">
    <property type="term" value="F:double-stranded RNA binding"/>
    <property type="evidence" value="ECO:0000314"/>
    <property type="project" value="MGI"/>
</dbReference>
<dbReference type="GO" id="GO:0042802">
    <property type="term" value="F:identical protein binding"/>
    <property type="evidence" value="ECO:0000353"/>
    <property type="project" value="IntAct"/>
</dbReference>
<dbReference type="GO" id="GO:1990254">
    <property type="term" value="F:keratin filament binding"/>
    <property type="evidence" value="ECO:0000353"/>
    <property type="project" value="AgBase"/>
</dbReference>
<dbReference type="GO" id="GO:0060090">
    <property type="term" value="F:molecular adaptor activity"/>
    <property type="evidence" value="ECO:0000269"/>
    <property type="project" value="DisProt"/>
</dbReference>
<dbReference type="GO" id="GO:0019904">
    <property type="term" value="F:protein domain specific binding"/>
    <property type="evidence" value="ECO:0000353"/>
    <property type="project" value="UniProtKB"/>
</dbReference>
<dbReference type="GO" id="GO:0097110">
    <property type="term" value="F:scaffold protein binding"/>
    <property type="evidence" value="ECO:0000353"/>
    <property type="project" value="BHF-UCL"/>
</dbReference>
<dbReference type="GO" id="GO:0005200">
    <property type="term" value="F:structural constituent of cytoskeleton"/>
    <property type="evidence" value="ECO:0000314"/>
    <property type="project" value="UniProtKB"/>
</dbReference>
<dbReference type="GO" id="GO:0005212">
    <property type="term" value="F:structural constituent of eye lens"/>
    <property type="evidence" value="ECO:0007669"/>
    <property type="project" value="Ensembl"/>
</dbReference>
<dbReference type="GO" id="GO:0014002">
    <property type="term" value="P:astrocyte development"/>
    <property type="evidence" value="ECO:0007669"/>
    <property type="project" value="Ensembl"/>
</dbReference>
<dbReference type="GO" id="GO:0060020">
    <property type="term" value="P:Bergmann glial cell differentiation"/>
    <property type="evidence" value="ECO:0007669"/>
    <property type="project" value="Ensembl"/>
</dbReference>
<dbReference type="GO" id="GO:0071222">
    <property type="term" value="P:cellular response to lipopolysaccharide"/>
    <property type="evidence" value="ECO:0000315"/>
    <property type="project" value="UniProtKB"/>
</dbReference>
<dbReference type="GO" id="GO:0071225">
    <property type="term" value="P:cellular response to muramyl dipeptide"/>
    <property type="evidence" value="ECO:0000315"/>
    <property type="project" value="UniProtKB"/>
</dbReference>
<dbReference type="GO" id="GO:0071346">
    <property type="term" value="P:cellular response to type II interferon"/>
    <property type="evidence" value="ECO:0007669"/>
    <property type="project" value="Ensembl"/>
</dbReference>
<dbReference type="GO" id="GO:0045109">
    <property type="term" value="P:intermediate filament organization"/>
    <property type="evidence" value="ECO:0000250"/>
    <property type="project" value="UniProtKB"/>
</dbReference>
<dbReference type="GO" id="GO:0070307">
    <property type="term" value="P:lens fiber cell development"/>
    <property type="evidence" value="ECO:0007669"/>
    <property type="project" value="Ensembl"/>
</dbReference>
<dbReference type="GO" id="GO:0010977">
    <property type="term" value="P:negative regulation of neuron projection development"/>
    <property type="evidence" value="ECO:0007669"/>
    <property type="project" value="Ensembl"/>
</dbReference>
<dbReference type="GO" id="GO:0031175">
    <property type="term" value="P:neuron projection development"/>
    <property type="evidence" value="ECO:0007669"/>
    <property type="project" value="Ensembl"/>
</dbReference>
<dbReference type="GO" id="GO:0032967">
    <property type="term" value="P:positive regulation of collagen biosynthetic process"/>
    <property type="evidence" value="ECO:0000315"/>
    <property type="project" value="UniProtKB"/>
</dbReference>
<dbReference type="GO" id="GO:0010628">
    <property type="term" value="P:positive regulation of gene expression"/>
    <property type="evidence" value="ECO:0007669"/>
    <property type="project" value="Ensembl"/>
</dbReference>
<dbReference type="GO" id="GO:0043488">
    <property type="term" value="P:regulation of mRNA stability"/>
    <property type="evidence" value="ECO:0000315"/>
    <property type="project" value="UniProtKB"/>
</dbReference>
<dbReference type="DisProt" id="DP02862"/>
<dbReference type="FunFam" id="1.20.5.1160:FF:000001">
    <property type="entry name" value="Keratin type II"/>
    <property type="match status" value="1"/>
</dbReference>
<dbReference type="FunFam" id="1.20.5.170:FF:000002">
    <property type="entry name" value="Type I keratin KA11"/>
    <property type="match status" value="1"/>
</dbReference>
<dbReference type="FunFam" id="1.20.5.500:FF:000001">
    <property type="entry name" value="Type II keratin 23"/>
    <property type="match status" value="1"/>
</dbReference>
<dbReference type="Gene3D" id="1.20.5.170">
    <property type="match status" value="1"/>
</dbReference>
<dbReference type="Gene3D" id="1.20.5.500">
    <property type="entry name" value="Single helix bin"/>
    <property type="match status" value="1"/>
</dbReference>
<dbReference type="Gene3D" id="1.20.5.1160">
    <property type="entry name" value="Vasodilator-stimulated phosphoprotein"/>
    <property type="match status" value="1"/>
</dbReference>
<dbReference type="InterPro" id="IPR018039">
    <property type="entry name" value="IF_conserved"/>
</dbReference>
<dbReference type="InterPro" id="IPR039008">
    <property type="entry name" value="IF_rod_dom"/>
</dbReference>
<dbReference type="InterPro" id="IPR006821">
    <property type="entry name" value="Intermed_filament_DNA-bd"/>
</dbReference>
<dbReference type="InterPro" id="IPR050405">
    <property type="entry name" value="Intermediate_filament"/>
</dbReference>
<dbReference type="PANTHER" id="PTHR45652">
    <property type="entry name" value="GLIAL FIBRILLARY ACIDIC PROTEIN"/>
    <property type="match status" value="1"/>
</dbReference>
<dbReference type="PANTHER" id="PTHR45652:SF5">
    <property type="entry name" value="VIMENTIN"/>
    <property type="match status" value="1"/>
</dbReference>
<dbReference type="Pfam" id="PF00038">
    <property type="entry name" value="Filament"/>
    <property type="match status" value="1"/>
</dbReference>
<dbReference type="Pfam" id="PF04732">
    <property type="entry name" value="Filament_head"/>
    <property type="match status" value="1"/>
</dbReference>
<dbReference type="SMART" id="SM01391">
    <property type="entry name" value="Filament"/>
    <property type="match status" value="1"/>
</dbReference>
<dbReference type="SUPFAM" id="SSF64593">
    <property type="entry name" value="Intermediate filament protein, coiled coil region"/>
    <property type="match status" value="2"/>
</dbReference>
<dbReference type="PROSITE" id="PS00226">
    <property type="entry name" value="IF_ROD_1"/>
    <property type="match status" value="1"/>
</dbReference>
<dbReference type="PROSITE" id="PS51842">
    <property type="entry name" value="IF_ROD_2"/>
    <property type="match status" value="1"/>
</dbReference>